<organism>
    <name type="scientific">Homo sapiens</name>
    <name type="common">Human</name>
    <dbReference type="NCBI Taxonomy" id="9606"/>
    <lineage>
        <taxon>Eukaryota</taxon>
        <taxon>Metazoa</taxon>
        <taxon>Chordata</taxon>
        <taxon>Craniata</taxon>
        <taxon>Vertebrata</taxon>
        <taxon>Euteleostomi</taxon>
        <taxon>Mammalia</taxon>
        <taxon>Eutheria</taxon>
        <taxon>Euarchontoglires</taxon>
        <taxon>Primates</taxon>
        <taxon>Haplorrhini</taxon>
        <taxon>Catarrhini</taxon>
        <taxon>Hominidae</taxon>
        <taxon>Homo</taxon>
    </lineage>
</organism>
<comment type="function">
    <text evidence="5 6 13 15">Adhesion G-protein coupled receptor (aGPCR) for androgen hormone 5alpha-dihydrotestosterone (5alpha-DHT), also named 17beta-hydroxy-5alpha-androstan-3-one, the most potent hormone among androgens (PubMed:39884271). Also activated by methenolone drug (PubMed:39884271). Ligand binding causes a conformation change that triggers signaling via guanine nucleotide-binding proteins (G proteins) and modulates the activity of downstream effectors, such as adenylate cyclase (PubMed:39884271). ADGRD1 is coupled to G(s) G proteins and mediates activation of adenylate cyclase activity (PubMed:22025619, PubMed:22575658, PubMed:35447113, PubMed:39884271). Acts as a 5alpha-DHT receptor in muscle cells, thereby increasing intracellular cyclic AMP (cAMP) levels and enhancing muscle strength (PubMed:39884271).</text>
</comment>
<comment type="activity regulation">
    <text evidence="10 11 12 13 14 15">Forms a heterodimer of 2 chains generated by proteolytic processing that remain associated through non-covalent interactions mediated by the GAIN-B domain (PubMed:34022221, PubMed:35418678). In the inactivated receptor, the Stachel sequence (also named stalk) is embedded in the GAIN-B domain, where it adopts a beta-strand conformation (PubMed:35418678, PubMed:35418679). On activation, the Stachel moves into the 7 transmembrane region and adopts a twisted hook-shaped configuration that forms contacts within the receptor, leading to coupling of a G-alpha protein, which activates signaling (PubMed:35418678, PubMed:35418679). The cleaved GAIN-B and N-terminal domains can then dissociate from the rest of the receptor (PubMed:35418678, PubMed:35418679). Interaction with ESYT1 in absence of cytosolic calcium inhibits the G protein-coupled receptor activity; interaction and inhibition is relieved when cytosolic calcium increases (PubMed:38758649). Activated by AP503, a small molecule that activates ADGRD1 without activating androgen nuclear receptors: AP503 enhances muscle strength without eliciting androgenic adverse effects (PubMed:39884271). Activated by the 8E3E8 antibody that targets the N-terminus (PubMed:35447113).</text>
</comment>
<comment type="subunit">
    <text evidence="2 10 11 14">Heterodimer of 2 chains generated by proteolytic processing; the large extracellular N-terminal fragment and the membrane-bound C-terminal fragment predominantly remain associated and non-covalently linked (By similarity) (PubMed:34022221, PubMed:35418678). Interacts with ESYT1; interaction takes place in absence of cytosolic calcium and inhibits the G protein-coupled receptor activity of ADGRD1 (PubMed:38758649).</text>
</comment>
<comment type="interaction">
    <interactant intactId="EBI-18053335">
        <id>Q6QNK2</id>
    </interactant>
    <interactant intactId="EBI-2506064">
        <id>O60831</id>
        <label>PRAF2</label>
    </interactant>
    <organismsDiffer>false</organismsDiffer>
    <experiments>3</experiments>
</comment>
<comment type="subcellular location">
    <subcellularLocation>
        <location evidence="5 7 10">Cell membrane</location>
        <topology evidence="11 12">Multi-pass membrane protein</topology>
    </subcellularLocation>
</comment>
<comment type="alternative products">
    <event type="alternative splicing"/>
    <isoform>
        <id>Q6QNK2-1</id>
        <name>1</name>
        <sequence type="displayed"/>
    </isoform>
    <isoform>
        <id>Q6QNK2-2</id>
        <name>2</name>
        <sequence type="described" ref="VSP_012788 VSP_012789"/>
    </isoform>
    <isoform>
        <id>Q6QNK2-3</id>
        <name>3</name>
        <sequence type="described" ref="VSP_012787 VSP_012790"/>
    </isoform>
    <isoform>
        <id>Q6QNK2-4</id>
        <name>4</name>
        <sequence type="described" ref="VSP_053678"/>
    </isoform>
</comment>
<comment type="tissue specificity">
    <text evidence="9">Up-regulated in CD133(+) cell population of glioblastoma.</text>
</comment>
<comment type="induction">
    <text evidence="9">Up-regulated by hypoxia in hypoxia-inducible factor 1-alpha (HIF1A)-dependent manner.</text>
</comment>
<comment type="domain">
    <text evidence="7 11 12">The Stachel sequence (also named stalk) in the C-terminal part of the extracellular domain (ECD) functions as a tethered agonist (PubMed:25533341). In the inactivated receptor, the Stachel sequence (also named stalk) is embedded in the GAIN-B domain, where it adopts a beta-strand conformation (PubMed:35418678, PubMed:35418679). On activation, the Stachel moves into the 7 transmembrane region and adopts a twisted hook-shaped configuration that forms contacts within the receptor, leading to coupling of a G-alpha protein, which activates signaling (PubMed:35418678, PubMed:35418679).</text>
</comment>
<comment type="domain">
    <text evidence="5">The N-terminal domain and autocatalytic activity of ADGRD1 at the GPCR proteolysis site (GPS) are not required for G-protein coupling activity.</text>
</comment>
<comment type="PTM">
    <text evidence="2 10 11 13">Autoproteolytically processed at the GPS region of the GAIN-B domain; this cleavage modulates receptor activity (By similarity) (PubMed:34022221, PubMed:35418678, PubMed:35447113). Cleavage takes place early in the secretory pathway before N-glycosylation (PubMed:35418678).</text>
</comment>
<comment type="similarity">
    <text evidence="21">Belongs to the G-protein coupled receptor 2 family. Adhesion G-protein coupled receptor (ADGR) subfamily.</text>
</comment>
<feature type="signal peptide" evidence="1">
    <location>
        <begin position="1"/>
        <end position="25"/>
    </location>
</feature>
<feature type="chain" id="PRO_0000012905" description="Adhesion G-protein coupled receptor D1">
    <location>
        <begin position="26"/>
        <end position="874"/>
    </location>
</feature>
<feature type="chain" id="PRO_0000462397" description="Adhesion G-protein coupled receptor D1, N-terminal fragment" evidence="21">
    <location>
        <begin position="26"/>
        <end position="544"/>
    </location>
</feature>
<feature type="chain" id="PRO_0000462398" description="Adhesion G-protein coupled receptor D1, C-terminal fragment" evidence="21">
    <location>
        <begin position="545"/>
        <end position="874"/>
    </location>
</feature>
<feature type="topological domain" description="Extracellular" evidence="11 12 25 26">
    <location>
        <begin position="26"/>
        <end position="567"/>
    </location>
</feature>
<feature type="transmembrane region" description="Helical; Name=1" evidence="11 12 25 26">
    <location>
        <begin position="568"/>
        <end position="590"/>
    </location>
</feature>
<feature type="topological domain" description="Cytoplasmic" evidence="11 12 25 26">
    <location>
        <begin position="591"/>
        <end position="601"/>
    </location>
</feature>
<feature type="transmembrane region" description="Helical; Name=2" evidence="11 12 25 26">
    <location>
        <begin position="602"/>
        <end position="623"/>
    </location>
</feature>
<feature type="topological domain" description="Extracellular" evidence="11 12 25 26">
    <location>
        <begin position="624"/>
        <end position="632"/>
    </location>
</feature>
<feature type="transmembrane region" description="Helical; Name=3" evidence="11 12 25 26">
    <location>
        <begin position="633"/>
        <end position="655"/>
    </location>
</feature>
<feature type="topological domain" description="Cytoplasmic" evidence="11 12 25 26">
    <location>
        <begin position="656"/>
        <end position="673"/>
    </location>
</feature>
<feature type="transmembrane region" description="Helical; Name=4" evidence="11 12 25 26">
    <location>
        <begin position="674"/>
        <end position="695"/>
    </location>
</feature>
<feature type="topological domain" description="Extracellular" evidence="11 12 25 26">
    <location>
        <begin position="696"/>
        <end position="710"/>
    </location>
</feature>
<feature type="transmembrane region" description="Helical; Name=5" evidence="11 12 25 26">
    <location>
        <begin position="711"/>
        <end position="732"/>
    </location>
</feature>
<feature type="topological domain" description="Cytoplasmic" evidence="11 12 25 26">
    <location>
        <begin position="733"/>
        <end position="757"/>
    </location>
</feature>
<feature type="transmembrane region" description="Helical; Name=6" evidence="11 12 25 26">
    <location>
        <begin position="758"/>
        <end position="780"/>
    </location>
</feature>
<feature type="topological domain" description="Extracellular" evidence="11 12 25 26">
    <location>
        <begin position="781"/>
        <end position="783"/>
    </location>
</feature>
<feature type="transmembrane region" description="Helical; Name=7" evidence="11 12 25 26">
    <location>
        <begin position="784"/>
        <end position="810"/>
    </location>
</feature>
<feature type="topological domain" description="Cytoplasmic" evidence="11 12 25 26">
    <location>
        <begin position="811"/>
        <end position="874"/>
    </location>
</feature>
<feature type="domain" description="Pentraxin (PTX)" evidence="3">
    <location>
        <begin position="79"/>
        <end position="276"/>
    </location>
</feature>
<feature type="domain" description="GAIN-B" evidence="2">
    <location>
        <begin position="371"/>
        <end position="557"/>
    </location>
</feature>
<feature type="region of interest" description="GPS" evidence="2">
    <location>
        <begin position="510"/>
        <end position="557"/>
    </location>
</feature>
<feature type="region of interest" description="Stachel" evidence="22 23">
    <location>
        <begin position="546"/>
        <end position="554"/>
    </location>
</feature>
<feature type="region of interest" description="Disordered" evidence="4">
    <location>
        <begin position="854"/>
        <end position="874"/>
    </location>
</feature>
<feature type="compositionally biased region" description="Basic and acidic residues" evidence="4">
    <location>
        <begin position="861"/>
        <end position="874"/>
    </location>
</feature>
<feature type="binding site" evidence="15">
    <location>
        <position position="563"/>
    </location>
    <ligand>
        <name>17beta-hydroxy-5alpha-androstan-3-one</name>
        <dbReference type="ChEBI" id="CHEBI:16330"/>
    </ligand>
</feature>
<feature type="binding site" evidence="15">
    <location>
        <position position="795"/>
    </location>
    <ligand>
        <name>17beta-hydroxy-5alpha-androstan-3-one</name>
        <dbReference type="ChEBI" id="CHEBI:16330"/>
    </ligand>
</feature>
<feature type="site" description="Cleavage; by autolysis" evidence="2 11">
    <location>
        <begin position="544"/>
        <end position="545"/>
    </location>
</feature>
<feature type="glycosylation site" description="N-linked (GlcNAc...) asparagine" evidence="1">
    <location>
        <position position="90"/>
    </location>
</feature>
<feature type="glycosylation site" description="N-linked (GlcNAc...) asparagine" evidence="1">
    <location>
        <position position="185"/>
    </location>
</feature>
<feature type="glycosylation site" description="N-linked (GlcNAc...) asparagine" evidence="1">
    <location>
        <position position="282"/>
    </location>
</feature>
<feature type="glycosylation site" description="N-linked (GlcNAc...) asparagine" evidence="1">
    <location>
        <position position="302"/>
    </location>
</feature>
<feature type="glycosylation site" description="N-linked (GlcNAc...) asparagine" evidence="1">
    <location>
        <position position="319"/>
    </location>
</feature>
<feature type="glycosylation site" description="N-linked (GlcNAc...) asparagine" evidence="1">
    <location>
        <position position="394"/>
    </location>
</feature>
<feature type="glycosylation site" description="N-linked (GlcNAc...) asparagine" evidence="1">
    <location>
        <position position="476"/>
    </location>
</feature>
<feature type="glycosylation site" description="N-linked (GlcNAc...) asparagine" evidence="1">
    <location>
        <position position="501"/>
    </location>
</feature>
<feature type="glycosylation site" description="N-linked (GlcNAc...) asparagine" evidence="1">
    <location>
        <position position="533"/>
    </location>
</feature>
<feature type="disulfide bond" evidence="2">
    <location>
        <begin position="510"/>
        <end position="539"/>
    </location>
</feature>
<feature type="disulfide bond" evidence="2">
    <location>
        <begin position="527"/>
        <end position="541"/>
    </location>
</feature>
<feature type="disulfide bond" evidence="11 12 15 25 26">
    <location>
        <begin position="632"/>
        <end position="704"/>
    </location>
</feature>
<feature type="splice variant" id="VSP_012787" description="In isoform 3." evidence="17">
    <location>
        <begin position="1"/>
        <end position="481"/>
    </location>
</feature>
<feature type="splice variant" id="VSP_012788" description="In isoform 2." evidence="16">
    <location>
        <begin position="1"/>
        <end position="314"/>
    </location>
</feature>
<feature type="splice variant" id="VSP_053678" description="In isoform 4." evidence="18">
    <original>G</original>
    <variation>GASRTHKLTVLPSRNATFVYSNDSAYSNLSATV</variation>
    <location>
        <position position="62"/>
    </location>
</feature>
<feature type="splice variant" id="VSP_012789" description="In isoform 2." evidence="16">
    <original>QTALNLTKTFLKAVGEILLLPGWIALS</original>
    <variation>MEKGTELLVSPSQSGPGGDQPLLVKHR</variation>
    <location>
        <begin position="315"/>
        <end position="341"/>
    </location>
</feature>
<feature type="splice variant" id="VSP_012790" description="In isoform 3." evidence="17">
    <original>LITVHLKHRL</original>
    <variation>MHRVCFLSFQ</variation>
    <location>
        <begin position="482"/>
        <end position="491"/>
    </location>
</feature>
<feature type="sequence variant" id="VAR_077698" description="Does not affect subcellular location; does not change G-protein coupled receptor activity; dbSNP:rs149181066." evidence="8">
    <original>Y</original>
    <variation>C</variation>
    <location>
        <position position="18"/>
    </location>
</feature>
<feature type="sequence variant" id="VAR_077699" description="Does not affect subcellular location; does not change G-protein coupled receptor activity; dbSNP:rs146611221." evidence="8">
    <original>Y</original>
    <variation>H</variation>
    <location>
        <position position="18"/>
    </location>
</feature>
<feature type="sequence variant" id="VAR_077700" description="Does not affect subcellular location; does not change G-protein coupled receptor activity; dbSNP:rs376178471." evidence="8">
    <original>D</original>
    <variation>N</variation>
    <location>
        <position position="32"/>
    </location>
</feature>
<feature type="sequence variant" id="VAR_077701" description="Does not affect subcellular location; increases G-protein coupled receptor activity; dbSNP:rs267603378." evidence="8">
    <original>E</original>
    <variation>K</variation>
    <location>
        <position position="78"/>
    </location>
</feature>
<feature type="sequence variant" id="VAR_077702" description="Does not affect subcellular location; does not change G-protein coupled receptor activity; dbSNP:rs143395855." evidence="8">
    <original>T</original>
    <variation>M</variation>
    <location>
        <position position="82"/>
    </location>
</feature>
<feature type="sequence variant" id="VAR_077703" description="Does not affect subcellular location; decreases G-protein coupled receptor activity; dbSNP:rs199848650." evidence="8">
    <original>Y</original>
    <variation>C</variation>
    <location>
        <position position="85"/>
    </location>
</feature>
<feature type="sequence variant" id="VAR_077704" description="Does not affect subcellular location; does not change G-protein coupled receptor activity; dbSNP:rs201546462." evidence="8">
    <original>Y</original>
    <variation>D</variation>
    <location>
        <position position="89"/>
    </location>
</feature>
<feature type="sequence variant" id="VAR_077705" description="Reduces cell membrane location; decreases G-protein coupled receptor activity; dbSNP:rs148928637." evidence="8">
    <original>F</original>
    <variation>L</variation>
    <location>
        <position position="110"/>
    </location>
</feature>
<feature type="sequence variant" id="VAR_077706" description="Does not affect subcellular location; does not change G-protein coupled receptor activity; dbSNP:rs199526762." evidence="8">
    <original>S</original>
    <variation>F</variation>
    <location>
        <position position="138"/>
    </location>
</feature>
<feature type="sequence variant" id="VAR_077707" description="Does not affect subcellular location; does not change G-protein coupled receptor activity; dbSNP:rs374985420." evidence="8">
    <original>G</original>
    <variation>S</variation>
    <location>
        <position position="140"/>
    </location>
</feature>
<feature type="sequence variant" id="VAR_077708" description="Does not affect subcellular location; increases G-protein coupled receptor activity; dbSNP:rs142759046." evidence="8">
    <original>G</original>
    <variation>D</variation>
    <location>
        <position position="141"/>
    </location>
</feature>
<feature type="sequence variant" id="VAR_077709" description="Does not affect subcellular location; does not change G-protein coupled receptor activity; dbSNP:rs146945782." evidence="8">
    <original>V</original>
    <variation>L</variation>
    <location>
        <position position="145"/>
    </location>
</feature>
<feature type="sequence variant" id="VAR_077710" description="Does not affect subcellular location; decreases G-protein coupled receptor activity; dbSNP:rs144030317." evidence="8">
    <original>R</original>
    <variation>W</variation>
    <location>
        <position position="150"/>
    </location>
</feature>
<feature type="sequence variant" id="VAR_077711" description="Reduces cell membrane location; decreases G-protein coupled receptor activity; dbSNP:rs141606054." evidence="8">
    <original>W</original>
    <variation>S</variation>
    <location>
        <position position="174"/>
    </location>
</feature>
<feature type="sequence variant" id="VAR_077712" description="Reduces cell membrane location; decreases G-protein coupled receptor activity; dbSNP:rs148148477." evidence="8">
    <original>E</original>
    <variation>K</variation>
    <location>
        <position position="178"/>
    </location>
</feature>
<feature type="sequence variant" id="VAR_077713" description="Does not affect subcellular location; does not change G-protein coupled receptor activity; dbSNP:rs61732860." evidence="8">
    <original>V</original>
    <variation>I</variation>
    <location>
        <position position="184"/>
    </location>
</feature>
<feature type="sequence variant" id="VAR_077714" description="Reduces cell membrane location; decreases G-protein coupled receptor activity; dbSNP:rs267603379." evidence="8">
    <original>G</original>
    <variation>R</variation>
    <location>
        <position position="195"/>
    </location>
</feature>
<feature type="sequence variant" id="VAR_077715" description="Does not affect subcellular location; does not change G-protein coupled receptor activity; dbSNP:rs146310036." evidence="8">
    <original>R</original>
    <variation>C</variation>
    <location>
        <position position="199"/>
    </location>
</feature>
<feature type="sequence variant" id="VAR_077716" description="Does not affect subcellular location; does not change G-protein coupled receptor activity; dbSNP:rs375084180." evidence="8">
    <original>R</original>
    <variation>H</variation>
    <location>
        <position position="199"/>
    </location>
</feature>
<feature type="sequence variant" id="VAR_077717" description="Does not affect subcellular location; does not change G-protein coupled receptor activity; dbSNP:rs201045213." evidence="8">
    <original>E</original>
    <variation>D</variation>
    <location>
        <position position="203"/>
    </location>
</feature>
<feature type="sequence variant" id="VAR_077718" description="Does not affect subcellular location; does not change G-protein coupled receptor activity; dbSNP:rs139478688." evidence="8">
    <original>V</original>
    <variation>M</variation>
    <location>
        <position position="209"/>
    </location>
</feature>
<feature type="sequence variant" id="VAR_077719" description="Does not affect subcellular location; does not change G-protein coupled receptor activity; dbSNP:rs377562590." evidence="8">
    <original>D</original>
    <variation>N</variation>
    <location>
        <position position="226"/>
    </location>
</feature>
<feature type="sequence variant" id="VAR_077720" description="Does not affect subcellular location; does not change G-protein coupled receptor activity; dbSNP:rs370807516." evidence="8">
    <original>R</original>
    <variation>W</variation>
    <location>
        <position position="233"/>
    </location>
</feature>
<feature type="sequence variant" id="VAR_077721" description="Does not affect subcellular location; does not change G-protein coupled receptor activity; dbSNP:rs368468703." evidence="8">
    <original>A</original>
    <variation>T</variation>
    <location>
        <position position="241"/>
    </location>
</feature>
<feature type="sequence variant" id="VAR_077722" description="Does not affect subcellular location; does not change G-protein coupled receptor activity; dbSNP:rs201057341." evidence="8">
    <original>M</original>
    <variation>T</variation>
    <location>
        <position position="242"/>
    </location>
</feature>
<feature type="sequence variant" id="VAR_077723" description="Does not affect subcellular location; does not change G-protein coupled receptor activity; dbSNP:rs201053759." evidence="8">
    <original>T</original>
    <variation>I</variation>
    <location>
        <position position="245"/>
    </location>
</feature>
<feature type="sequence variant" id="VAR_077724" description="Does not affect subcellular location; does not change G-protein coupled receptor activity; dbSNP:rs146563785." evidence="8">
    <original>T</original>
    <variation>A</variation>
    <location>
        <position position="257"/>
    </location>
</feature>
<feature type="sequence variant" id="VAR_077725" description="Does not affect subcellular location; does not change G-protein coupled receptor activity; dbSNP:rs75096240." evidence="8">
    <original>P</original>
    <variation>Q</variation>
    <location>
        <position position="259"/>
    </location>
</feature>
<feature type="sequence variant" id="VAR_077726" description="Does not affect subcellular location; does not change G-protein coupled receptor activity; dbSNP:rs137909892." evidence="8">
    <original>S</original>
    <variation>Y</variation>
    <location>
        <position position="265"/>
    </location>
</feature>
<feature type="sequence variant" id="VAR_077727" description="Does not affect subcellular location; does not change G-protein coupled receptor activity; dbSNP:rs149012578." evidence="8">
    <original>S</original>
    <variation>N</variation>
    <location>
        <position position="268"/>
    </location>
</feature>
<feature type="sequence variant" id="VAR_077728" description="Does not affect subcellular location; does not change G-protein coupled receptor activity; dbSNP:rs147773154." evidence="8">
    <original>V</original>
    <variation>A</variation>
    <location>
        <position position="270"/>
    </location>
</feature>
<feature type="sequence variant" id="VAR_077729" description="Does not affect subcellular location; does not change G-protein coupled receptor activity; dbSNP:rs147105264." evidence="8">
    <original>V</original>
    <variation>M</variation>
    <location>
        <position position="270"/>
    </location>
</feature>
<feature type="sequence variant" id="VAR_077730" description="Does not affect subcellular location; does not change G-protein coupled receptor activity; dbSNP:rs146929634." evidence="8">
    <original>P</original>
    <variation>A</variation>
    <location>
        <position position="293"/>
    </location>
</feature>
<feature type="sequence variant" id="VAR_077731" description="Does not affect subcellular location; does not change G-protein coupled receptor activity; dbSNP:rs148017957." evidence="8">
    <original>G</original>
    <variation>R</variation>
    <location>
        <position position="294"/>
    </location>
</feature>
<feature type="sequence variant" id="VAR_077732" description="Does not affect subcellular location; does not change G-protein coupled receptor activity; dbSNP:rs201661954." evidence="8">
    <original>P</original>
    <variation>S</variation>
    <location>
        <position position="308"/>
    </location>
</feature>
<feature type="sequence variant" id="VAR_077733" description="Does not affect subcellular location; does not change G-protein coupled receptor activity; dbSNP:rs200641036." evidence="8">
    <original>L</original>
    <variation>F</variation>
    <location>
        <position position="318"/>
    </location>
</feature>
<feature type="sequence variant" id="VAR_077734" description="Does not affect subcellular location; does not change G-protein coupled receptor activity; dbSNP:rs370854685." evidence="8">
    <original>S</original>
    <variation>N</variation>
    <location>
        <position position="349"/>
    </location>
</feature>
<feature type="sequence variant" id="VAR_077735" description="Does not affect subcellular location; does not change G-protein coupled receptor activity; dbSNP:rs146050435." evidence="8">
    <original>N</original>
    <variation>S</variation>
    <location>
        <position position="364"/>
    </location>
</feature>
<feature type="sequence variant" id="VAR_077736" description="Does not affect subcellular location; does not change G-protein coupled receptor activity; dbSNP:rs142314859." evidence="8">
    <original>T</original>
    <variation>M</variation>
    <location>
        <position position="369"/>
    </location>
</feature>
<feature type="sequence variant" id="VAR_077737" description="Does not affect subcellular location; increases G-protein coupled receptor activity; dbSNP:rs200232576." evidence="8">
    <original>F</original>
    <variation>S</variation>
    <location>
        <position position="383"/>
    </location>
</feature>
<feature type="sequence variant" id="VAR_077738" description="Does not affect subcellular location; increases G-protein coupled receptor activity; dbSNP:rs374606811." evidence="8">
    <original>V</original>
    <variation>M</variation>
    <location>
        <position position="393"/>
    </location>
</feature>
<feature type="sequence variant" id="VAR_077739" description="Does not affect subcellular location; dbSNP:rs201985264." evidence="8">
    <original>H</original>
    <variation>Q</variation>
    <location>
        <position position="397"/>
    </location>
</feature>
<feature type="sequence variant" id="VAR_077740" description="Does not affect subcellular location; does not change G-protein coupled receptor activity; dbSNP:rs150882180." evidence="8">
    <original>R</original>
    <variation>C</variation>
    <location>
        <position position="399"/>
    </location>
</feature>
<feature type="sequence variant" id="VAR_077741" description="Does not affect subcellular location; increases G-protein coupled receptor activity; dbSNP:rs371536090." evidence="8">
    <original>G</original>
    <variation>A</variation>
    <location>
        <position position="404"/>
    </location>
</feature>
<feature type="sequence variant" id="VAR_077742" description="Does not affect subcellular location; does not change G-protein coupled receptor activity; dbSNP:rs145663007." evidence="8">
    <original>Q</original>
    <variation>P</variation>
    <location>
        <position position="405"/>
    </location>
</feature>
<feature type="sequence variant" id="VAR_077743" description="Does not affect subcellular location; does not change G-protein coupled receptor activity; dbSNP:rs376489706." evidence="8">
    <original>I</original>
    <variation>V</variation>
    <location>
        <position position="410"/>
    </location>
</feature>
<feature type="sequence variant" id="VAR_077744" description="Does not affect subcellular location; increases G-protein coupled receptor activity; dbSNP:rs147757048." evidence="8">
    <original>P</original>
    <variation>S</variation>
    <location>
        <position position="411"/>
    </location>
</feature>
<feature type="sequence variant" id="VAR_077745" description="Does not affect subcellular location; increases G-protein coupled receptor activity; dbSNP:rs142628291." evidence="8">
    <original>E</original>
    <variation>K</variation>
    <location>
        <position position="413"/>
    </location>
</feature>
<feature type="sequence variant" id="VAR_077746" description="Does not affect subcellular location; does not change G-protein coupled receptor activity; dbSNP:rs370959644." evidence="8">
    <original>A</original>
    <variation>V</variation>
    <location>
        <position position="419"/>
    </location>
</feature>
<feature type="sequence variant" id="VAR_077747" description="Does not affect subcellular location; does not change G-protein coupled receptor activity; dbSNP:rs374575404." evidence="8">
    <original>G</original>
    <variation>S</variation>
    <location>
        <position position="425"/>
    </location>
</feature>
<feature type="sequence variant" id="VAR_077748" description="Does not affect subcellular location; does not change G-protein coupled receptor activity; dbSNP:rs375271891." evidence="8">
    <original>A</original>
    <variation>T</variation>
    <location>
        <position position="441"/>
    </location>
</feature>
<feature type="sequence variant" id="VAR_077749" description="Reduces cell membrane location; decreases G-protein coupled receptor activity; dbSNP:rs200173874." evidence="8">
    <original>A</original>
    <variation>D</variation>
    <location>
        <position position="448"/>
    </location>
</feature>
<feature type="sequence variant" id="VAR_077750" description="Does not affect subcellular location; does not change G-protein coupled receptor activity; dbSNP:rs200060202." evidence="8">
    <original>H</original>
    <variation>R</variation>
    <location>
        <position position="450"/>
    </location>
</feature>
<feature type="sequence variant" id="VAR_077751" description="Does not affect subcellular location; increases G-protein coupled receptor activity; dbSNP:rs149065791." evidence="8">
    <original>D</original>
    <variation>N</variation>
    <location>
        <position position="453"/>
    </location>
</feature>
<feature type="sequence variant" id="VAR_077752" description="Does not affect subcellular location; does not change G-protein coupled receptor activity; dbSNP:rs143062748." evidence="8">
    <original>C</original>
    <variation>Y</variation>
    <location>
        <position position="454"/>
    </location>
</feature>
<feature type="sequence variant" id="VAR_077753" description="Does not affect subcellular location; does not change G-protein coupled receptor activity; dbSNP:rs140426880." evidence="8">
    <original>A</original>
    <variation>T</variation>
    <location>
        <position position="458"/>
    </location>
</feature>
<feature type="sequence variant" id="VAR_077754" description="Does not affect subcellular location; does not change G-protein coupled receptor activity; dbSNP:rs78638447." evidence="8">
    <original>S</original>
    <variation>A</variation>
    <location>
        <position position="464"/>
    </location>
</feature>
<feature type="sequence variant" id="VAR_077755" description="Does not affect subcellular location; does not change G-protein coupled receptor activity; dbSNP:rs138163855." evidence="8">
    <original>N</original>
    <variation>S</variation>
    <location>
        <position position="476"/>
    </location>
</feature>
<feature type="sequence variant" id="VAR_077756" description="Does not affect subcellular location; does not change G-protein coupled receptor activity; dbSNP:rs372643228." evidence="8">
    <original>S</original>
    <variation>L</variation>
    <location>
        <position position="478"/>
    </location>
</feature>
<feature type="sequence variant" id="VAR_077757" description="Does not affect subcellular location; does not change G-protein coupled receptor activity; dbSNP:rs149266247." evidence="8">
    <original>T</original>
    <variation>M</variation>
    <location>
        <position position="484"/>
    </location>
</feature>
<feature type="sequence variant" id="VAR_077758" description="Does not affect subcellular location; does not change G-protein coupled receptor activity; dbSNP:rs369012277." evidence="8">
    <original>V</original>
    <variation>I</variation>
    <location>
        <position position="485"/>
    </location>
</feature>
<feature type="sequence variant" id="VAR_077759" description="Does not affect subcellular location; does not change G-protein coupled receptor activity; dbSNP:rs200576124." evidence="8">
    <original>E</original>
    <variation>G</variation>
    <location>
        <position position="498"/>
    </location>
</feature>
<feature type="sequence variant" id="VAR_077760" description="Does not affect subcellular location; does not change G-protein coupled receptor activity; dbSNP:rs150620459." evidence="8">
    <original>A</original>
    <variation>S</variation>
    <location>
        <position position="499"/>
    </location>
</feature>
<feature type="sequence variant" id="VAR_049461" description="Does not affect subcellular location; does not change G-protein coupled receptor activity; dbSNP:rs11833801." evidence="8">
    <original>V</original>
    <variation>M</variation>
    <location>
        <position position="508"/>
    </location>
</feature>
<feature type="sequence variant" id="VAR_049462" description="Does not change G-protein coupled receptor activity; dbSNP:rs11061318." evidence="8">
    <original>S</original>
    <variation>L</variation>
    <location>
        <position position="523"/>
    </location>
</feature>
<feature type="sequence variant" id="VAR_077761" description="Does not affect subcellular location; does not change G-protein coupled receptor activity; dbSNP:rs370443698." evidence="8">
    <original>N</original>
    <variation>K</variation>
    <location>
        <position position="524"/>
    </location>
</feature>
<feature type="sequence variant" id="VAR_077762" description="Does not affect subcellular location; does not change G-protein coupled receptor activity; dbSNP:rs201849687." evidence="8">
    <original>V</original>
    <variation>A</variation>
    <location>
        <position position="538"/>
    </location>
</feature>
<feature type="sequence variant" id="VAR_077763" description="Does not affect subcellular location; does not change G-protein coupled receptor activity; dbSNP:rs200971352." evidence="8">
    <original>V</original>
    <variation>I</variation>
    <location>
        <position position="538"/>
    </location>
</feature>
<feature type="sequence variant" id="VAR_077764" description="Does not affect subcellular location; does not change G-protein coupled receptor activity; dbSNP:rs147294464." evidence="8">
    <original>R</original>
    <variation>C</variation>
    <location>
        <position position="540"/>
    </location>
</feature>
<feature type="sequence variant" id="VAR_077765" description="Does not affect subcellular location; does not change G-protein coupled receptor activity; dbSNP:rs145630930." evidence="8">
    <original>R</original>
    <variation>H</variation>
    <location>
        <position position="540"/>
    </location>
</feature>
<feature type="sequence variant" id="VAR_077766" description="Does not affect subcellular location; does not change G-protein coupled receptor activity; dbSNP:rs371989819." evidence="8">
    <original>R</original>
    <variation>C</variation>
    <location>
        <position position="560"/>
    </location>
</feature>
<feature type="sequence variant" id="VAR_077767" description="Does not affect subcellular location; does not change G-protein coupled receptor activity; dbSNP:rs375179921." evidence="8">
    <original>R</original>
    <variation>H</variation>
    <location>
        <position position="560"/>
    </location>
</feature>
<feature type="sequence variant" id="VAR_077768" description="Does not affect subcellular location; does not change G-protein coupled receptor activity; dbSNP:rs192515185." evidence="8">
    <original>S</original>
    <variation>L</variation>
    <location>
        <position position="567"/>
    </location>
</feature>
<feature type="sequence variant" id="VAR_077769" description="Does not affect subcellular location; does not change G-protein coupled receptor activity; dbSNP:rs139017446." evidence="8">
    <original>I</original>
    <variation>V</variation>
    <location>
        <position position="569"/>
    </location>
</feature>
<feature type="sequence variant" id="VAR_077770" description="Does not affect subcellular location; does not change G-protein coupled receptor activity; dbSNP:rs201161291." evidence="8">
    <original>A</original>
    <variation>T</variation>
    <location>
        <position position="589"/>
    </location>
</feature>
<feature type="sequence variant" id="VAR_077771" description="Does not affect subcellular location; does not change G-protein coupled receptor activity; dbSNP:rs189007948." evidence="8">
    <original>V</original>
    <variation>M</variation>
    <location>
        <position position="594"/>
    </location>
</feature>
<feature type="sequence variant" id="VAR_077772" description="Does not affect subcellular location; does not change G-protein coupled receptor activity; dbSNP:rs201524753." evidence="8">
    <original>R</original>
    <variation>H</variation>
    <location>
        <position position="601"/>
    </location>
</feature>
<feature type="sequence variant" id="VAR_077773" description="Does not affect subcellular location; decreases G-protein coupled receptor activity; dbSNP:rs200052797." evidence="8">
    <original>L</original>
    <variation>M</variation>
    <location>
        <position position="608"/>
    </location>
</feature>
<feature type="sequence variant" id="VAR_077774" description="Does not affect subcellular location; does not change G-protein coupled receptor activity; dbSNP:rs117457351." evidence="8">
    <original>R</original>
    <variation>C</variation>
    <location>
        <position position="624"/>
    </location>
</feature>
<feature type="sequence variant" id="VAR_077775" description="Does not affect subcellular location; does not change G-protein coupled receptor activity; dbSNP:rs199778477." evidence="8">
    <original>E</original>
    <variation>K</variation>
    <location>
        <position position="626"/>
    </location>
</feature>
<feature type="sequence variant" id="VAR_077776" description="Does not affect subcellular location; does not change G-protein coupled receptor activity; dbSNP:rs145482553." evidence="8">
    <original>T</original>
    <variation>I</variation>
    <location>
        <position position="630"/>
    </location>
</feature>
<feature type="sequence variant" id="VAR_077777" description="Does not affect subcellular location; decreases G-protein coupled receptor activity; dbSNP:rs377401276." evidence="8">
    <original>S</original>
    <variation>L</variation>
    <location>
        <position position="667"/>
    </location>
</feature>
<feature type="sequence variant" id="VAR_077778" description="Does not affect subcellular location; does not change G-protein coupled receptor activity; dbSNP:rs141128784." evidence="8">
    <original>R</original>
    <variation>H</variation>
    <location>
        <position position="673"/>
    </location>
</feature>
<feature type="sequence variant" id="VAR_077779" description="Does not affect subcellular location; does not change G-protein coupled receptor activity; dbSNP:rs143163307." evidence="8">
    <original>M</original>
    <variation>T</variation>
    <location>
        <position position="695"/>
    </location>
</feature>
<feature type="sequence variant" id="VAR_077780" description="Does not affect subcellular location; does not change G-protein coupled receptor activity; dbSNP:rs149859410." evidence="8">
    <original>G</original>
    <variation>R</variation>
    <location>
        <position position="699"/>
    </location>
</feature>
<feature type="sequence variant" id="VAR_077781" description="Does not affect subcellular location; does not change G-protein coupled receptor activity; dbSNP:rs141439159." evidence="8">
    <original>A</original>
    <variation>V</variation>
    <location>
        <position position="720"/>
    </location>
</feature>
<feature type="sequence variant" id="VAR_077782" description="Does not affect subcellular location; does not change G-protein coupled receptor activity; dbSNP:rs143902981." evidence="8">
    <original>A</original>
    <variation>T</variation>
    <location>
        <position position="743"/>
    </location>
</feature>
<feature type="sequence variant" id="VAR_077783" description="Does not affect subcellular location; does not change G-protein coupled receptor activity; dbSNP:rs372207677." evidence="8">
    <original>H</original>
    <variation>R</variation>
    <location>
        <position position="749"/>
    </location>
</feature>
<feature type="sequence variant" id="VAR_077784" description="Does not affect subcellular location; does not change G-protein coupled receptor activity; dbSNP:rs147763331." evidence="8">
    <original>D</original>
    <variation>E</variation>
    <location>
        <position position="751"/>
    </location>
</feature>
<feature type="sequence variant" id="VAR_077785" description="Does not affect subcellular location; does not change G-protein coupled receptor activity; dbSNP:rs369201469." evidence="8">
    <original>A</original>
    <variation>E</variation>
    <location>
        <position position="761"/>
    </location>
</feature>
<feature type="sequence variant" id="VAR_077786" description="Reduces cell membrane location; decreases G-protein coupled receptor activity; dbSNP:rs149434203." evidence="8">
    <original>V</original>
    <variation>M</variation>
    <location>
        <position position="764"/>
    </location>
</feature>
<feature type="sequence variant" id="VAR_077787" description="Does not affect subcellular location; does not change G-protein coupled receptor activity; dbSNP:rs144814859." evidence="8">
    <original>V</original>
    <variation>M</variation>
    <location>
        <position position="777"/>
    </location>
</feature>
<feature type="sequence variant" id="VAR_077788" description="Does not affect subcellular location; does not change G-protein coupled receptor activity; dbSNP:rs61746588." evidence="8">
    <original>A</original>
    <variation>V</variation>
    <location>
        <position position="779"/>
    </location>
</feature>
<feature type="sequence variant" id="VAR_077789" description="Does not affect subcellular location; does not change G-protein coupled receptor activity; dbSNP:rs375488636." evidence="8">
    <original>T</original>
    <variation>M</variation>
    <location>
        <position position="793"/>
    </location>
</feature>
<feature type="sequence variant" id="VAR_077790" description="Decreases cell surface location; abolishes G-protein coupled receptor activity; dbSNP:rs369853823." evidence="8">
    <original>N</original>
    <variation>K</variation>
    <location>
        <position position="795"/>
    </location>
</feature>
<feature type="sequence variant" id="VAR_077791" description="Reduces cell membrane location; decreases G-protein coupled receptor activity; dbSNP:rs368828722." evidence="8">
    <original>A</original>
    <variation>T</variation>
    <location>
        <position position="816"/>
    </location>
</feature>
<feature type="sequence variant" id="VAR_077792" description="Does not affect subcellular location; increases G-protein coupled receptor activity; dbSNP:rs371135988." evidence="8">
    <original>T</original>
    <variation>M</variation>
    <location>
        <position position="827"/>
    </location>
</feature>
<feature type="sequence variant" id="VAR_077793" description="Does not affect subcellular location; does not change G-protein coupled receptor activity; dbSNP:rs146661482." evidence="8">
    <original>A</original>
    <variation>T</variation>
    <location>
        <position position="831"/>
    </location>
</feature>
<feature type="sequence variant" id="VAR_077794" description="Does not affect subcellular location; does not change G-protein coupled receptor activity; dbSNP:rs144023497." evidence="8">
    <original>A</original>
    <variation>T</variation>
    <location>
        <position position="836"/>
    </location>
</feature>
<feature type="sequence variant" id="VAR_077795" description="Does not affect subcellular location; does not change G-protein coupled receptor activity; dbSNP:rs367789023." evidence="8">
    <original>A</original>
    <variation>V</variation>
    <location>
        <position position="836"/>
    </location>
</feature>
<feature type="sequence variant" id="VAR_077796" description="Does not affect subcellular location; does not change G-protein coupled receptor activity; dbSNP:rs78058857." evidence="8">
    <original>M</original>
    <variation>T</variation>
    <location>
        <position position="851"/>
    </location>
</feature>
<feature type="sequence variant" id="VAR_077797" description="Does not affect subcellular location; does not change G-protein coupled receptor activity; dbSNP:rs61740366." evidence="8">
    <original>R</original>
    <variation>H</variation>
    <location>
        <position position="868"/>
    </location>
</feature>
<feature type="sequence variant" id="VAR_077798" description="Does not affect subcellular location; does not change G-protein coupled receptor activity; dbSNP:rs377434309." evidence="8">
    <original>V</original>
    <variation>I</variation>
    <location>
        <position position="869"/>
    </location>
</feature>
<feature type="sequence variant" id="VAR_077799" description="Does not affect subcellular location; does not change G-protein coupled receptor activity; dbSNP:rs143670024." evidence="8">
    <original>D</original>
    <variation>N</variation>
    <location>
        <position position="870"/>
    </location>
</feature>
<feature type="sequence variant" id="VAR_077800" description="Does not affect subcellular location; does not change G-protein coupled receptor activity; dbSNP:rs148442158." evidence="8">
    <original>V</original>
    <variation>M</variation>
    <location>
        <position position="874"/>
    </location>
</feature>
<feature type="mutagenesis site" description="Increased G protein-coupled receptor signaling." evidence="11">
    <original>H</original>
    <variation>D</variation>
    <location>
        <position position="543"/>
    </location>
</feature>
<feature type="mutagenesis site" description="Does not affect membrane trafficking and basal activity. Abolished autoproteolytic cleavage." evidence="5 10 13">
    <original>H</original>
    <variation>R</variation>
    <location>
        <position position="543"/>
    </location>
</feature>
<feature type="mutagenesis site" description="Increased G protein-coupled receptor signaling." evidence="11">
    <original>L</original>
    <variation>N</variation>
    <location>
        <position position="544"/>
    </location>
</feature>
<feature type="mutagenesis site" description="Decreased autoproteolytic cleavage and decreased G-protein coupled receptor activity; does not affect subcellular location." evidence="7 11">
    <original>T</original>
    <variation>A</variation>
    <location>
        <position position="545"/>
    </location>
</feature>
<feature type="mutagenesis site" description="Strongly decreased G protein-coupled receptor signaling." evidence="11 12">
    <original>N</original>
    <variation>A</variation>
    <location>
        <position position="546"/>
    </location>
</feature>
<feature type="mutagenesis site" description="Strongly decreased G protein-coupled receptor signaling." evidence="11 12">
    <original>F</original>
    <variation>A</variation>
    <location>
        <position position="547"/>
    </location>
</feature>
<feature type="mutagenesis site" description="Strongly decreased G protein-coupled receptor signaling." evidence="11 12">
    <original>I</original>
    <variation>A</variation>
    <location>
        <position position="549"/>
    </location>
</feature>
<feature type="mutagenesis site" description="Abolishes G-protein coupled receptor activity; does not affect subcellular location." evidence="7 11 12">
    <original>L</original>
    <variation>A</variation>
    <location>
        <position position="550"/>
    </location>
</feature>
<feature type="mutagenesis site" description="Abolishes G-protein coupled receptor activity; does not affect subcellular location." evidence="7 11 12">
    <original>M</original>
    <variation>A</variation>
    <location>
        <position position="551"/>
    </location>
</feature>
<feature type="mutagenesis site" description="Strongly decreased G protein-coupled receptor signaling." evidence="11">
    <original>V</original>
    <variation>A</variation>
    <location>
        <position position="553"/>
    </location>
</feature>
<feature type="mutagenesis site" description="Abolishes G-protein coupled receptor activity; does not affect subcellular location." evidence="7 12">
    <original>V</original>
    <variation>A</variation>
    <location>
        <position position="554"/>
    </location>
</feature>
<feature type="mutagenesis site" description="Decreased activation by 5alpha-dihydrotestosterone." evidence="15">
    <original>Q</original>
    <variation>A</variation>
    <location>
        <position position="563"/>
    </location>
</feature>
<feature type="mutagenesis site" description="Strongly decreased G protein-coupled receptor signaling." evidence="12">
    <original>H</original>
    <variation>A</variation>
    <location>
        <position position="605"/>
    </location>
</feature>
<feature type="mutagenesis site" description="Decreased activation by 5alpha-dihydrotestosterone." evidence="15">
    <original>L</original>
    <variation>A</variation>
    <location>
        <position position="619"/>
    </location>
</feature>
<feature type="mutagenesis site" description="Decreased activation by 5alpha-dihydrotestosterone." evidence="15">
    <original>F</original>
    <variation>A</variation>
    <location>
        <position position="623"/>
    </location>
</feature>
<feature type="mutagenesis site" description="Increased affinity to 5alpha-dihydrotestosterone." evidence="15">
    <original>H</original>
    <variation>A</variation>
    <location>
        <position position="640"/>
    </location>
</feature>
<feature type="mutagenesis site" description="Decreased activation by 5alpha-dihydrotestosterone." evidence="15">
    <original>F</original>
    <variation>A</variation>
    <location>
        <position position="643"/>
    </location>
</feature>
<feature type="mutagenesis site" description="Strongly decreased G protein-coupled receptor signaling." evidence="12">
    <original>F</original>
    <variation>A</variation>
    <location>
        <position position="647"/>
    </location>
</feature>
<feature type="mutagenesis site" description="Strongly decreased G protein-coupled receptor signaling." evidence="12">
    <original>M</original>
    <variation>A</variation>
    <location>
        <position position="650"/>
    </location>
</feature>
<feature type="mutagenesis site" description="Strongly decreased G protein-coupled receptor signaling." evidence="12">
    <original>E</original>
    <variation>A</variation>
    <location>
        <position position="653"/>
    </location>
</feature>
<feature type="mutagenesis site" description="Strongly decreased G protein-coupled receptor signaling." evidence="12">
    <original>H</original>
    <variation>A</variation>
    <variation>D</variation>
    <location>
        <position position="656"/>
    </location>
</feature>
<feature type="mutagenesis site" description="Strongly decreased G protein-coupled receptor signaling." evidence="12">
    <original>L</original>
    <variation>A</variation>
    <location>
        <position position="657"/>
    </location>
</feature>
<feature type="mutagenesis site" description="Strongly decreased G protein-coupled receptor signaling." evidence="12">
    <original>Y</original>
    <variation>A</variation>
    <location>
        <position position="658"/>
    </location>
</feature>
<feature type="mutagenesis site" description="Strongly decreased G protein-coupled receptor signaling." evidence="11">
    <original>W</original>
    <variation>A</variation>
    <location>
        <position position="705"/>
    </location>
</feature>
<feature type="mutagenesis site" description="Strongly decreased G protein-coupled receptor signaling." evidence="11">
    <original>I</original>
    <variation>A</variation>
    <location>
        <position position="713"/>
    </location>
</feature>
<feature type="mutagenesis site" description="Strongly decreased G protein-coupled receptor signaling." evidence="11">
    <original>W</original>
    <variation>A</variation>
    <location>
        <position position="714"/>
    </location>
</feature>
<feature type="mutagenesis site" description="Increased affinity to 5alpha-dihydrotestosterone." evidence="15">
    <original>F</original>
    <variation>A</variation>
    <location>
        <position position="716"/>
    </location>
</feature>
<feature type="mutagenesis site" description="Strongly decreased G protein-coupled receptor signaling." evidence="11">
    <original>A</original>
    <variation>G</variation>
    <location>
        <position position="720"/>
    </location>
</feature>
<feature type="mutagenesis site" description="Decreased G protein-coupled receptor signaling." evidence="12">
    <original>I</original>
    <variation>A</variation>
    <location>
        <position position="724"/>
    </location>
</feature>
<feature type="mutagenesis site" description="Strongly decreased G protein-coupled receptor signaling." evidence="11">
    <original>N</original>
    <variation>A</variation>
    <location>
        <position position="727"/>
    </location>
</feature>
<feature type="mutagenesis site" description="Strongly decreased G protein-coupled receptor signaling." evidence="12">
    <original>I</original>
    <variation>A</variation>
    <location>
        <position position="730"/>
    </location>
</feature>
<feature type="mutagenesis site" description="Strongly decreased G protein-coupled receptor signaling." evidence="12">
    <original>V</original>
    <variation>A</variation>
    <location>
        <position position="734"/>
    </location>
</feature>
<feature type="mutagenesis site" description="Strongly decreased G protein-coupled receptor signaling." evidence="12">
    <original>L</original>
    <variation>A</variation>
    <location>
        <position position="765"/>
    </location>
</feature>
<feature type="mutagenesis site" description="Strongly decreased G protein-coupled receptor signaling." evidence="11 12">
    <original>P</original>
    <variation>A</variation>
    <location>
        <position position="767"/>
    </location>
</feature>
<feature type="mutagenesis site" description="Strongly decreased G protein-coupled receptor signaling." evidence="11 12">
    <original>I</original>
    <variation>A</variation>
    <location>
        <position position="768"/>
    </location>
</feature>
<feature type="mutagenesis site" description="Strongly decreased G protein-coupled receptor signaling." evidence="11 12">
    <original>L</original>
    <variation>A</variation>
    <location>
        <position position="769"/>
    </location>
</feature>
<feature type="mutagenesis site" description="Strongly decreased G protein-coupled receptor signaling." evidence="12">
    <original>G</original>
    <variation>A</variation>
    <location>
        <position position="770"/>
    </location>
</feature>
<feature type="mutagenesis site" description="Decreased activation by 5alpha-dihydrotestosterone. Strongly decreased G protein-coupled receptor signaling. Strongly decreased G protein-coupled receptor signaling." evidence="11 12 15">
    <original>W</original>
    <variation>A</variation>
    <location>
        <position position="773"/>
    </location>
</feature>
<feature type="mutagenesis site" description="Strongly decreased G protein-coupled receptor signaling." evidence="11">
    <original>F</original>
    <variation>A</variation>
    <location>
        <position position="791"/>
    </location>
</feature>
<feature type="mutagenesis site" description="Decreased activation by 5alpha-dihydrotestosterone." evidence="15">
    <original>N</original>
    <variation>L</variation>
    <location>
        <position position="795"/>
    </location>
</feature>
<feature type="mutagenesis site" description="Strongly decreased G protein-coupled receptor signaling." evidence="11 12">
    <original>Q</original>
    <variation>A</variation>
    <location>
        <position position="798"/>
    </location>
</feature>
<feature type="mutagenesis site" description="Strongly decreased G protein-coupled receptor signaling." evidence="12">
    <original>G</original>
    <variation>A</variation>
    <location>
        <position position="799"/>
    </location>
</feature>
<feature type="mutagenesis site" description="Decreased G protein-coupled receptor signaling." evidence="11">
    <original>F</original>
    <variation>A</variation>
    <location>
        <position position="805"/>
    </location>
</feature>
<feature type="mutagenesis site" description="Decreased G protein-coupled receptor signaling." evidence="11">
    <original>H</original>
    <variation>A</variation>
    <location>
        <position position="806"/>
    </location>
</feature>
<feature type="mutagenesis site" description="Does not affect membrane trafficking. Abolishes receptor activity." evidence="5">
    <original>L</original>
    <variation>T</variation>
    <location>
        <position position="808"/>
    </location>
</feature>
<feature type="sequence conflict" description="In Ref. 2; AAP35063." evidence="21" ref="2">
    <original>N</original>
    <variation>S</variation>
    <location>
        <position position="703"/>
    </location>
</feature>
<feature type="helix" evidence="31">
    <location>
        <begin position="547"/>
        <end position="551"/>
    </location>
</feature>
<feature type="helix" evidence="32">
    <location>
        <begin position="560"/>
        <end position="590"/>
    </location>
</feature>
<feature type="helix" evidence="32">
    <location>
        <begin position="591"/>
        <end position="593"/>
    </location>
</feature>
<feature type="helix" evidence="31">
    <location>
        <begin position="596"/>
        <end position="598"/>
    </location>
</feature>
<feature type="strand" evidence="32">
    <location>
        <begin position="599"/>
        <end position="601"/>
    </location>
</feature>
<feature type="helix" evidence="32">
    <location>
        <begin position="602"/>
        <end position="622"/>
    </location>
</feature>
<feature type="strand" evidence="31">
    <location>
        <begin position="627"/>
        <end position="629"/>
    </location>
</feature>
<feature type="helix" evidence="32">
    <location>
        <begin position="630"/>
        <end position="661"/>
    </location>
</feature>
<feature type="turn" evidence="31">
    <location>
        <begin position="665"/>
        <end position="668"/>
    </location>
</feature>
<feature type="helix" evidence="32">
    <location>
        <begin position="672"/>
        <end position="679"/>
    </location>
</feature>
<feature type="helix" evidence="32">
    <location>
        <begin position="681"/>
        <end position="693"/>
    </location>
</feature>
<feature type="helix" evidence="31">
    <location>
        <begin position="695"/>
        <end position="697"/>
    </location>
</feature>
<feature type="strand" evidence="32">
    <location>
        <begin position="701"/>
        <end position="706"/>
    </location>
</feature>
<feature type="turn" evidence="32">
    <location>
        <begin position="708"/>
        <end position="710"/>
    </location>
</feature>
<feature type="helix" evidence="32">
    <location>
        <begin position="714"/>
        <end position="736"/>
    </location>
</feature>
<feature type="helix" evidence="32">
    <location>
        <begin position="739"/>
        <end position="744"/>
    </location>
</feature>
<feature type="helix" evidence="32">
    <location>
        <begin position="746"/>
        <end position="749"/>
    </location>
</feature>
<feature type="helix" evidence="32">
    <location>
        <begin position="753"/>
        <end position="763"/>
    </location>
</feature>
<feature type="helix" evidence="32">
    <location>
        <begin position="765"/>
        <end position="769"/>
    </location>
</feature>
<feature type="helix" evidence="32">
    <location>
        <begin position="771"/>
        <end position="773"/>
    </location>
</feature>
<feature type="helix" evidence="32">
    <location>
        <begin position="774"/>
        <end position="777"/>
    </location>
</feature>
<feature type="helix" evidence="32">
    <location>
        <begin position="778"/>
        <end position="780"/>
    </location>
</feature>
<feature type="helix" evidence="32">
    <location>
        <begin position="784"/>
        <end position="796"/>
    </location>
</feature>
<feature type="helix" evidence="32">
    <location>
        <begin position="798"/>
        <end position="806"/>
    </location>
</feature>
<feature type="helix" evidence="32">
    <location>
        <begin position="811"/>
        <end position="820"/>
    </location>
</feature>
<gene>
    <name evidence="20 24" type="primary">ADGRD1</name>
    <name evidence="19" type="synonym">GPR133</name>
    <name type="synonym">PGR25</name>
</gene>
<keyword id="KW-0002">3D-structure</keyword>
<keyword id="KW-0025">Alternative splicing</keyword>
<keyword id="KW-1003">Cell membrane</keyword>
<keyword id="KW-1015">Disulfide bond</keyword>
<keyword id="KW-0297">G-protein coupled receptor</keyword>
<keyword id="KW-0325">Glycoprotein</keyword>
<keyword id="KW-0472">Membrane</keyword>
<keyword id="KW-1267">Proteomics identification</keyword>
<keyword id="KW-0675">Receptor</keyword>
<keyword id="KW-1185">Reference proteome</keyword>
<keyword id="KW-0732">Signal</keyword>
<keyword id="KW-0807">Transducer</keyword>
<keyword id="KW-0812">Transmembrane</keyword>
<keyword id="KW-1133">Transmembrane helix</keyword>
<sequence>MEKLLRLCCWYSWLLLFYYNFQVRGVYSRSQDHPGFQVLASASHYWPLENVDGIHELQDTTGDIVEGKVNKGIYLKEEKGVTLLYYGRYNSSCISKPEQCGPEGVTFSFFWKTQGEQSRPIPSAYGGQVISNGFKVCSSGGRGSVELYTRDNSMTWEASFSPPGPYWTHVLFTWKSKEGLKVYVNGTLSTSDPSGKVSRDYGESNVNLVIGSEQDQAKCYENGAFDEFIIWERALTPDEIAMYFTAAIGKHALLSSTLPSLFMTSTASPVMPTDAYHPIITNLTEERKTFQSPGVILSYLQNVSLSLPSKSLSEQTALNLTKTFLKAVGEILLLPGWIALSEDSAVVLSLIDTIDTVMGHVSSNLHGSTPQVTVEGSSAMAEFSVAKILPKTVNSSHYRFPAHGQSFIQIPHEAFHRHAWSTVVGLLYHSMHYYLNNIWPAHTKIAEAMHHQDCLLFATSHLISLEVSPPPTLSQNLSGSPLITVHLKHRLTRKQHSEATNSSNRVFVYCAFLDFSSGEGVWSNHGCALTRGNLTYSVCRCTHLTNFAILMQVVPLELARGHQVALSSISYVGCSLSVLCLVATLVTFAVLSSVSTIRNQRYHIHANLSFAVLVAQVLLLISFRLEPGTTPCQVMAVLLHYFFLSAFAWMLVEGLHLYSMVIKVFGSEDSKHRYYYGMGWGFPLLICIISLSFAMDSYGTSNNCWLSLASGAIWAFVAPALFVIVVNIGILIAVTRVISQISADNYKIHGDPSAFKLTAKAVAVLLPILGTSWVFGVLAVNGCAVVFQYMFATLNSLQGLFIFLFHCLLNSEVRAAFKHKTKVWSLTSSSARTSNAKPFHSDLMNGTRPGMASTKLSPWDKSSHSAHRVDLSAV</sequence>
<reference key="1">
    <citation type="submission" date="2004-01" db="EMBL/GenBank/DDBJ databases">
        <authorList>
            <person name="Bonner T.I."/>
            <person name="Nagle J.W."/>
            <person name="Kauffman D."/>
        </authorList>
    </citation>
    <scope>NUCLEOTIDE SEQUENCE [MRNA] (ISOFORM 1)</scope>
    <source>
        <tissue>Brain</tissue>
    </source>
</reference>
<reference key="2">
    <citation type="journal article" date="2004" name="Genomics">
        <title>The human and mouse repertoire of the adhesion family of G-protein-coupled receptors.</title>
        <authorList>
            <person name="Bjarnadottir T.K."/>
            <person name="Fredriksson R."/>
            <person name="Hoeglund P.J."/>
            <person name="Gloriam D.E."/>
            <person name="Lagerstroem M.C."/>
            <person name="Schioeth H.B."/>
        </authorList>
    </citation>
    <scope>NUCLEOTIDE SEQUENCE [MRNA] (ISOFORM 3)</scope>
</reference>
<reference key="3">
    <citation type="submission" date="2008-02" db="EMBL/GenBank/DDBJ databases">
        <title>Common splice variant of human GPR133 in brain.</title>
        <authorList>
            <person name="Bonner T.I."/>
            <person name="Sloger M."/>
            <person name="Nagle J.W."/>
            <person name="Kauffman D."/>
        </authorList>
    </citation>
    <scope>NUCLEOTIDE SEQUENCE [MRNA] (ISOFORM 1)</scope>
    <scope>ALTERNATIVE SPLICING</scope>
</reference>
<reference key="4">
    <citation type="journal article" date="2004" name="Nat. Genet.">
        <title>Complete sequencing and characterization of 21,243 full-length human cDNAs.</title>
        <authorList>
            <person name="Ota T."/>
            <person name="Suzuki Y."/>
            <person name="Nishikawa T."/>
            <person name="Otsuki T."/>
            <person name="Sugiyama T."/>
            <person name="Irie R."/>
            <person name="Wakamatsu A."/>
            <person name="Hayashi K."/>
            <person name="Sato H."/>
            <person name="Nagai K."/>
            <person name="Kimura K."/>
            <person name="Makita H."/>
            <person name="Sekine M."/>
            <person name="Obayashi M."/>
            <person name="Nishi T."/>
            <person name="Shibahara T."/>
            <person name="Tanaka T."/>
            <person name="Ishii S."/>
            <person name="Yamamoto J."/>
            <person name="Saito K."/>
            <person name="Kawai Y."/>
            <person name="Isono Y."/>
            <person name="Nakamura Y."/>
            <person name="Nagahari K."/>
            <person name="Murakami K."/>
            <person name="Yasuda T."/>
            <person name="Iwayanagi T."/>
            <person name="Wagatsuma M."/>
            <person name="Shiratori A."/>
            <person name="Sudo H."/>
            <person name="Hosoiri T."/>
            <person name="Kaku Y."/>
            <person name="Kodaira H."/>
            <person name="Kondo H."/>
            <person name="Sugawara M."/>
            <person name="Takahashi M."/>
            <person name="Kanda K."/>
            <person name="Yokoi T."/>
            <person name="Furuya T."/>
            <person name="Kikkawa E."/>
            <person name="Omura Y."/>
            <person name="Abe K."/>
            <person name="Kamihara K."/>
            <person name="Katsuta N."/>
            <person name="Sato K."/>
            <person name="Tanikawa M."/>
            <person name="Yamazaki M."/>
            <person name="Ninomiya K."/>
            <person name="Ishibashi T."/>
            <person name="Yamashita H."/>
            <person name="Murakawa K."/>
            <person name="Fujimori K."/>
            <person name="Tanai H."/>
            <person name="Kimata M."/>
            <person name="Watanabe M."/>
            <person name="Hiraoka S."/>
            <person name="Chiba Y."/>
            <person name="Ishida S."/>
            <person name="Ono Y."/>
            <person name="Takiguchi S."/>
            <person name="Watanabe S."/>
            <person name="Yosida M."/>
            <person name="Hotuta T."/>
            <person name="Kusano J."/>
            <person name="Kanehori K."/>
            <person name="Takahashi-Fujii A."/>
            <person name="Hara H."/>
            <person name="Tanase T.-O."/>
            <person name="Nomura Y."/>
            <person name="Togiya S."/>
            <person name="Komai F."/>
            <person name="Hara R."/>
            <person name="Takeuchi K."/>
            <person name="Arita M."/>
            <person name="Imose N."/>
            <person name="Musashino K."/>
            <person name="Yuuki H."/>
            <person name="Oshima A."/>
            <person name="Sasaki N."/>
            <person name="Aotsuka S."/>
            <person name="Yoshikawa Y."/>
            <person name="Matsunawa H."/>
            <person name="Ichihara T."/>
            <person name="Shiohata N."/>
            <person name="Sano S."/>
            <person name="Moriya S."/>
            <person name="Momiyama H."/>
            <person name="Satoh N."/>
            <person name="Takami S."/>
            <person name="Terashima Y."/>
            <person name="Suzuki O."/>
            <person name="Nakagawa S."/>
            <person name="Senoh A."/>
            <person name="Mizoguchi H."/>
            <person name="Goto Y."/>
            <person name="Shimizu F."/>
            <person name="Wakebe H."/>
            <person name="Hishigaki H."/>
            <person name="Watanabe T."/>
            <person name="Sugiyama A."/>
            <person name="Takemoto M."/>
            <person name="Kawakami B."/>
            <person name="Yamazaki M."/>
            <person name="Watanabe K."/>
            <person name="Kumagai A."/>
            <person name="Itakura S."/>
            <person name="Fukuzumi Y."/>
            <person name="Fujimori Y."/>
            <person name="Komiyama M."/>
            <person name="Tashiro H."/>
            <person name="Tanigami A."/>
            <person name="Fujiwara T."/>
            <person name="Ono T."/>
            <person name="Yamada K."/>
            <person name="Fujii Y."/>
            <person name="Ozaki K."/>
            <person name="Hirao M."/>
            <person name="Ohmori Y."/>
            <person name="Kawabata A."/>
            <person name="Hikiji T."/>
            <person name="Kobatake N."/>
            <person name="Inagaki H."/>
            <person name="Ikema Y."/>
            <person name="Okamoto S."/>
            <person name="Okitani R."/>
            <person name="Kawakami T."/>
            <person name="Noguchi S."/>
            <person name="Itoh T."/>
            <person name="Shigeta K."/>
            <person name="Senba T."/>
            <person name="Matsumura K."/>
            <person name="Nakajima Y."/>
            <person name="Mizuno T."/>
            <person name="Morinaga M."/>
            <person name="Sasaki M."/>
            <person name="Togashi T."/>
            <person name="Oyama M."/>
            <person name="Hata H."/>
            <person name="Watanabe M."/>
            <person name="Komatsu T."/>
            <person name="Mizushima-Sugano J."/>
            <person name="Satoh T."/>
            <person name="Shirai Y."/>
            <person name="Takahashi Y."/>
            <person name="Nakagawa K."/>
            <person name="Okumura K."/>
            <person name="Nagase T."/>
            <person name="Nomura N."/>
            <person name="Kikuchi H."/>
            <person name="Masuho Y."/>
            <person name="Yamashita R."/>
            <person name="Nakai K."/>
            <person name="Yada T."/>
            <person name="Nakamura Y."/>
            <person name="Ohara O."/>
            <person name="Isogai T."/>
            <person name="Sugano S."/>
        </authorList>
    </citation>
    <scope>NUCLEOTIDE SEQUENCE [LARGE SCALE MRNA] (ISOFORM 2)</scope>
    <source>
        <tissue>Brain</tissue>
    </source>
</reference>
<reference key="5">
    <citation type="journal article" date="2006" name="Nature">
        <title>The finished DNA sequence of human chromosome 12.</title>
        <authorList>
            <person name="Scherer S.E."/>
            <person name="Muzny D.M."/>
            <person name="Buhay C.J."/>
            <person name="Chen R."/>
            <person name="Cree A."/>
            <person name="Ding Y."/>
            <person name="Dugan-Rocha S."/>
            <person name="Gill R."/>
            <person name="Gunaratne P."/>
            <person name="Harris R.A."/>
            <person name="Hawes A.C."/>
            <person name="Hernandez J."/>
            <person name="Hodgson A.V."/>
            <person name="Hume J."/>
            <person name="Jackson A."/>
            <person name="Khan Z.M."/>
            <person name="Kovar-Smith C."/>
            <person name="Lewis L.R."/>
            <person name="Lozado R.J."/>
            <person name="Metzker M.L."/>
            <person name="Milosavljevic A."/>
            <person name="Miner G.R."/>
            <person name="Montgomery K.T."/>
            <person name="Morgan M.B."/>
            <person name="Nazareth L.V."/>
            <person name="Scott G."/>
            <person name="Sodergren E."/>
            <person name="Song X.-Z."/>
            <person name="Steffen D."/>
            <person name="Lovering R.C."/>
            <person name="Wheeler D.A."/>
            <person name="Worley K.C."/>
            <person name="Yuan Y."/>
            <person name="Zhang Z."/>
            <person name="Adams C.Q."/>
            <person name="Ansari-Lari M.A."/>
            <person name="Ayele M."/>
            <person name="Brown M.J."/>
            <person name="Chen G."/>
            <person name="Chen Z."/>
            <person name="Clerc-Blankenburg K.P."/>
            <person name="Davis C."/>
            <person name="Delgado O."/>
            <person name="Dinh H.H."/>
            <person name="Draper H."/>
            <person name="Gonzalez-Garay M.L."/>
            <person name="Havlak P."/>
            <person name="Jackson L.R."/>
            <person name="Jacob L.S."/>
            <person name="Kelly S.H."/>
            <person name="Li L."/>
            <person name="Li Z."/>
            <person name="Liu J."/>
            <person name="Liu W."/>
            <person name="Lu J."/>
            <person name="Maheshwari M."/>
            <person name="Nguyen B.-V."/>
            <person name="Okwuonu G.O."/>
            <person name="Pasternak S."/>
            <person name="Perez L.M."/>
            <person name="Plopper F.J.H."/>
            <person name="Santibanez J."/>
            <person name="Shen H."/>
            <person name="Tabor P.E."/>
            <person name="Verduzco D."/>
            <person name="Waldron L."/>
            <person name="Wang Q."/>
            <person name="Williams G.A."/>
            <person name="Zhang J."/>
            <person name="Zhou J."/>
            <person name="Allen C.C."/>
            <person name="Amin A.G."/>
            <person name="Anyalebechi V."/>
            <person name="Bailey M."/>
            <person name="Barbaria J.A."/>
            <person name="Bimage K.E."/>
            <person name="Bryant N.P."/>
            <person name="Burch P.E."/>
            <person name="Burkett C.E."/>
            <person name="Burrell K.L."/>
            <person name="Calderon E."/>
            <person name="Cardenas V."/>
            <person name="Carter K."/>
            <person name="Casias K."/>
            <person name="Cavazos I."/>
            <person name="Cavazos S.R."/>
            <person name="Ceasar H."/>
            <person name="Chacko J."/>
            <person name="Chan S.N."/>
            <person name="Chavez D."/>
            <person name="Christopoulos C."/>
            <person name="Chu J."/>
            <person name="Cockrell R."/>
            <person name="Cox C.D."/>
            <person name="Dang M."/>
            <person name="Dathorne S.R."/>
            <person name="David R."/>
            <person name="Davis C.M."/>
            <person name="Davy-Carroll L."/>
            <person name="Deshazo D.R."/>
            <person name="Donlin J.E."/>
            <person name="D'Souza L."/>
            <person name="Eaves K.A."/>
            <person name="Egan A."/>
            <person name="Emery-Cohen A.J."/>
            <person name="Escotto M."/>
            <person name="Flagg N."/>
            <person name="Forbes L.D."/>
            <person name="Gabisi A.M."/>
            <person name="Garza M."/>
            <person name="Hamilton C."/>
            <person name="Henderson N."/>
            <person name="Hernandez O."/>
            <person name="Hines S."/>
            <person name="Hogues M.E."/>
            <person name="Huang M."/>
            <person name="Idlebird D.G."/>
            <person name="Johnson R."/>
            <person name="Jolivet A."/>
            <person name="Jones S."/>
            <person name="Kagan R."/>
            <person name="King L.M."/>
            <person name="Leal B."/>
            <person name="Lebow H."/>
            <person name="Lee S."/>
            <person name="LeVan J.M."/>
            <person name="Lewis L.C."/>
            <person name="London P."/>
            <person name="Lorensuhewa L.M."/>
            <person name="Loulseged H."/>
            <person name="Lovett D.A."/>
            <person name="Lucier A."/>
            <person name="Lucier R.L."/>
            <person name="Ma J."/>
            <person name="Madu R.C."/>
            <person name="Mapua P."/>
            <person name="Martindale A.D."/>
            <person name="Martinez E."/>
            <person name="Massey E."/>
            <person name="Mawhiney S."/>
            <person name="Meador M.G."/>
            <person name="Mendez S."/>
            <person name="Mercado C."/>
            <person name="Mercado I.C."/>
            <person name="Merritt C.E."/>
            <person name="Miner Z.L."/>
            <person name="Minja E."/>
            <person name="Mitchell T."/>
            <person name="Mohabbat F."/>
            <person name="Mohabbat K."/>
            <person name="Montgomery B."/>
            <person name="Moore N."/>
            <person name="Morris S."/>
            <person name="Munidasa M."/>
            <person name="Ngo R.N."/>
            <person name="Nguyen N.B."/>
            <person name="Nickerson E."/>
            <person name="Nwaokelemeh O.O."/>
            <person name="Nwokenkwo S."/>
            <person name="Obregon M."/>
            <person name="Oguh M."/>
            <person name="Oragunye N."/>
            <person name="Oviedo R.J."/>
            <person name="Parish B.J."/>
            <person name="Parker D.N."/>
            <person name="Parrish J."/>
            <person name="Parks K.L."/>
            <person name="Paul H.A."/>
            <person name="Payton B.A."/>
            <person name="Perez A."/>
            <person name="Perrin W."/>
            <person name="Pickens A."/>
            <person name="Primus E.L."/>
            <person name="Pu L.-L."/>
            <person name="Puazo M."/>
            <person name="Quiles M.M."/>
            <person name="Quiroz J.B."/>
            <person name="Rabata D."/>
            <person name="Reeves K."/>
            <person name="Ruiz S.J."/>
            <person name="Shao H."/>
            <person name="Sisson I."/>
            <person name="Sonaike T."/>
            <person name="Sorelle R.P."/>
            <person name="Sutton A.E."/>
            <person name="Svatek A.F."/>
            <person name="Svetz L.A."/>
            <person name="Tamerisa K.S."/>
            <person name="Taylor T.R."/>
            <person name="Teague B."/>
            <person name="Thomas N."/>
            <person name="Thorn R.D."/>
            <person name="Trejos Z.Y."/>
            <person name="Trevino B.K."/>
            <person name="Ukegbu O.N."/>
            <person name="Urban J.B."/>
            <person name="Vasquez L.I."/>
            <person name="Vera V.A."/>
            <person name="Villasana D.M."/>
            <person name="Wang L."/>
            <person name="Ward-Moore S."/>
            <person name="Warren J.T."/>
            <person name="Wei X."/>
            <person name="White F."/>
            <person name="Williamson A.L."/>
            <person name="Wleczyk R."/>
            <person name="Wooden H.S."/>
            <person name="Wooden S.H."/>
            <person name="Yen J."/>
            <person name="Yoon L."/>
            <person name="Yoon V."/>
            <person name="Zorrilla S.E."/>
            <person name="Nelson D."/>
            <person name="Kucherlapati R."/>
            <person name="Weinstock G."/>
            <person name="Gibbs R.A."/>
        </authorList>
    </citation>
    <scope>NUCLEOTIDE SEQUENCE [LARGE SCALE GENOMIC DNA]</scope>
</reference>
<reference key="6">
    <citation type="journal article" date="2004" name="Genome Res.">
        <title>The status, quality, and expansion of the NIH full-length cDNA project: the Mammalian Gene Collection (MGC).</title>
        <authorList>
            <consortium name="The MGC Project Team"/>
        </authorList>
    </citation>
    <scope>NUCLEOTIDE SEQUENCE [LARGE SCALE MRNA] (ISOFORMS 1 AND 4)</scope>
</reference>
<reference key="7">
    <citation type="journal article" date="2003" name="Proc. Natl. Acad. Sci. U.S.A.">
        <title>The G protein-coupled receptor repertoires of human and mouse.</title>
        <authorList>
            <person name="Vassilatis D.K."/>
            <person name="Hohmann J.G."/>
            <person name="Zeng H."/>
            <person name="Li F."/>
            <person name="Ranchalis J.E."/>
            <person name="Mortrud M.T."/>
            <person name="Brown A."/>
            <person name="Rodriguez S.S."/>
            <person name="Weller J.R."/>
            <person name="Wright A.C."/>
            <person name="Bergmann J.E."/>
            <person name="Gaitanaris G.A."/>
        </authorList>
    </citation>
    <scope>NUCLEOTIDE SEQUENCE [LARGE SCALE MRNA] OF 355-708</scope>
</reference>
<reference key="8">
    <citation type="journal article" date="2011" name="J. Biol. Chem.">
        <title>Cell adhesion receptor GPR133 couples to Gs protein.</title>
        <authorList>
            <person name="Bohnekamp J."/>
            <person name="Schoneberg T."/>
        </authorList>
    </citation>
    <scope>FUNCTION</scope>
    <scope>MUTAGENESIS OF HIS-543 AND LEU-808</scope>
    <scope>SUBCELLULAR LOCATION</scope>
    <scope>DOMAIN</scope>
</reference>
<reference key="9">
    <citation type="journal article" date="2012" name="FEBS Lett.">
        <title>Signaling property study of adhesion G-protein-coupled receptors.</title>
        <authorList>
            <person name="Gupte J."/>
            <person name="Swaminath G."/>
            <person name="Danao J."/>
            <person name="Tian H."/>
            <person name="Li Y."/>
            <person name="Wu X."/>
        </authorList>
    </citation>
    <scope>FUNCTION</scope>
</reference>
<reference key="10">
    <citation type="journal article" date="2014" name="Cell Rep.">
        <title>A tethered agonist within the ectodomain activates the adhesion G protein-coupled receptors GPR126 and GPR133.</title>
        <authorList>
            <person name="Liebscher I."/>
            <person name="Schoen J."/>
            <person name="Petersen S.C."/>
            <person name="Fischer L."/>
            <person name="Auerbach N."/>
            <person name="Demberg L.M."/>
            <person name="Mogha A."/>
            <person name="Coester M."/>
            <person name="Simon K.U."/>
            <person name="Rothemund S."/>
            <person name="Monk K.R."/>
            <person name="Schoeneberg T."/>
        </authorList>
    </citation>
    <scope>STACHEL MOTIF</scope>
    <scope>MUTAGENESIS OF THR-545; LEU-550; MET-551 AND VAL-554</scope>
    <scope>SUBCELLULAR LOCATION</scope>
</reference>
<reference key="11">
    <citation type="journal article" date="2015" name="Pharmacol. Rev.">
        <title>International union of basic and clinical pharmacology. XCIV. Adhesion G protein-coupled receptors.</title>
        <authorList>
            <person name="Hamann J."/>
            <person name="Aust G."/>
            <person name="Arac D."/>
            <person name="Engel F.B."/>
            <person name="Formstone C."/>
            <person name="Fredriksson R."/>
            <person name="Hall R.A."/>
            <person name="Harty B.L."/>
            <person name="Kirchhoff C."/>
            <person name="Knapp B."/>
            <person name="Krishnan A."/>
            <person name="Liebscher I."/>
            <person name="Lin H.H."/>
            <person name="Martinelli D.C."/>
            <person name="Monk K.R."/>
            <person name="Peeters M.C."/>
            <person name="Piao X."/>
            <person name="Promel S."/>
            <person name="Schoneberg T."/>
            <person name="Schwartz T.W."/>
            <person name="Singer K."/>
            <person name="Stacey M."/>
            <person name="Ushkaryov Y.A."/>
            <person name="Vallon M."/>
            <person name="Wolfrum U."/>
            <person name="Wright M.W."/>
            <person name="Xu L."/>
            <person name="Langenhan T."/>
            <person name="Schioth H.B."/>
        </authorList>
    </citation>
    <scope>NOMENCLATURE</scope>
</reference>
<reference key="12">
    <citation type="journal article" date="2016" name="BMC Genomics">
        <title>Functional relevance of naturally occurring mutations in adhesion G protein-coupled receptor ADGRD1 (GPR133).</title>
        <authorList>
            <person name="Fischer L."/>
            <person name="Wilde C."/>
            <person name="Schoeneberg T."/>
            <person name="Liebscher I."/>
        </authorList>
    </citation>
    <scope>CHARACTERIZATION OF VARIANTS CYS-18; HIS-18; ASN-32; LYS-78; MET-82; CYS-85; ASP-89; MET-110; PHE-138; SER-140; ASP-141; LEU-145; TRP-150; SER-174; LYS-178; ILE-184; ARG-195; CYS-199; HIS-199; ASP-203; MET-209; ASN-226; TRP-233; THR-241; THR-242; ILE-245; ALA-257; GLN-259; TYR-265; ASN-268; ALA-270; MET-270; ALA-293; ARG-294; SER-308; PHE-318; ASN-349; SER-364; MET-369; SER-383; MET-393; GLN-397; CYS-399; PRO-405; PRO-410; SER-411; LYS-413; VAL-419; SER-425; THR-441; ASP-448; ASN-453; TYR-454; THR-458; ALA-464; SER-476; LEU-478; MET-484; ILE-485; GLY-498; SER-499; MET-508; LEU-523; SER-524; ALA-538; ILE-538; CYS-540; HIS-540; CYS-560; HIS-560; LEU-567; VAL-569; THR-589; MET-594; HIS-601; HIS-608; CYS-624; LYS-626; LEU-667; HIS-673; THR-695; ARG-699; VAL-720; THR-743; ARG-749; GLU-751; GLU-761; MET-777; VAL-779; MET-793; LYS-795; THR-816; MET-827; THR-831; THR-836; VAL-836; THR-851; HIS-868; ILE-869; ASN-870 AND MET-874</scope>
</reference>
<reference key="13">
    <citation type="journal article" date="2016" name="Oncogenesis">
        <title>GPR133 (ADGRD1), an adhesion G-protein-coupled receptor, is necessary for glioblastoma growth.</title>
        <authorList>
            <person name="Bayin N.S."/>
            <person name="Frenster J.D."/>
            <person name="Kane J.R."/>
            <person name="Rubenstein J."/>
            <person name="Modrek A.S."/>
            <person name="Baitalmal R."/>
            <person name="Dolgalev I."/>
            <person name="Rudzenski K."/>
            <person name="Scarabottolo L."/>
            <person name="Crespi D."/>
            <person name="Redaelli L."/>
            <person name="Snuderl M."/>
            <person name="Golfinos J.G."/>
            <person name="Doyle W."/>
            <person name="Pacione D."/>
            <person name="Parker E.C."/>
            <person name="Chi A.S."/>
            <person name="Heguy A."/>
            <person name="MacNeil D.J."/>
            <person name="Shohdy N."/>
            <person name="Zagzag D."/>
            <person name="Placantonakis D.G."/>
        </authorList>
    </citation>
    <scope>INDUCTION</scope>
    <scope>TISSUE SPECIFICITY</scope>
</reference>
<reference key="14">
    <citation type="journal article" date="2021" name="J. Biol. Chem.">
        <title>Functional impact of intramolecular cleavage and dissociation of adhesion G protein-coupled receptor GPR133 (ADGRD1) on canonical signaling.</title>
        <authorList>
            <person name="Frenster J.D."/>
            <person name="Stephan G."/>
            <person name="Ravn-Boess N."/>
            <person name="Bready D."/>
            <person name="Wilcox J."/>
            <person name="Kieslich B."/>
            <person name="Wilde C."/>
            <person name="Straeter N."/>
            <person name="Wiggin G.R."/>
            <person name="Liebscher I."/>
            <person name="Schoeneberg T."/>
            <person name="Placantonakis D.G."/>
        </authorList>
    </citation>
    <scope>SUBCELLULAR LOCATION</scope>
    <scope>PROTEOLYTIC CLEAVAGE</scope>
    <scope>SUBUNIT</scope>
    <scope>MUTAGENESIS OF HIS-543</scope>
</reference>
<reference key="15">
    <citation type="journal article" date="2022" name="J. Biol. Chem.">
        <title>Activation of the adhesion G protein-coupled receptor GPR133 by antibodies targeting its N-terminus.</title>
        <authorList>
            <person name="Stephan G."/>
            <person name="Frenster J.D."/>
            <person name="Liebscher I."/>
            <person name="Placantonakis D.G."/>
        </authorList>
    </citation>
    <scope>FUNCTION</scope>
    <scope>ACTIVITY REGULATION</scope>
    <scope>PROTEOLYTIC CLEAVAGE</scope>
    <scope>MUTAGENESIS OF HIS-543</scope>
</reference>
<reference key="16">
    <citation type="journal article" date="2024" name="Cell Rep.">
        <title>Modulation of GPR133 (ADGRD1) signaling by its intracellular interaction partner extended synaptotagmin 1.</title>
        <authorList>
            <person name="Stephan G."/>
            <person name="Haddock S."/>
            <person name="Wang S."/>
            <person name="Erdjument-Bromage H."/>
            <person name="Liu W."/>
            <person name="Ravn-Boess N."/>
            <person name="Frenster J.D."/>
            <person name="Bready D."/>
            <person name="Cai J."/>
            <person name="Ronnen R."/>
            <person name="Sabio-Ortiz J."/>
            <person name="Fenyo D."/>
            <person name="Neubert T.A."/>
            <person name="Placantonakis D.G."/>
        </authorList>
    </citation>
    <scope>ACTIVITY REGULATION</scope>
    <scope>INTERACTION WITH ESYT1</scope>
</reference>
<reference evidence="25" key="17">
    <citation type="journal article" date="2022" name="Nature">
        <title>Structural basis for the tethered peptide activation of adhesion GPCRs.</title>
        <authorList>
            <person name="Ping Y.Q."/>
            <person name="Xiao P."/>
            <person name="Yang F."/>
            <person name="Zhao R.J."/>
            <person name="Guo S.C."/>
            <person name="Yan X."/>
            <person name="Wu X."/>
            <person name="Zhang C."/>
            <person name="Lu Y."/>
            <person name="Zhao F."/>
            <person name="Zhou F."/>
            <person name="Xi Y.T."/>
            <person name="Yin W."/>
            <person name="Liu F.Z."/>
            <person name="He D.F."/>
            <person name="Zhang D.L."/>
            <person name="Zhu Z.L."/>
            <person name="Jiang Y."/>
            <person name="Du L."/>
            <person name="Feng S.Q."/>
            <person name="Schoneberg T."/>
            <person name="Liebscher I."/>
            <person name="Xu H.E."/>
            <person name="Sun J.P."/>
        </authorList>
    </citation>
    <scope>STRUCTURE BY ELECTRON MICROSCOPY (3.00 ANGSTROMS) OF 545-827 IN COMPLEX WITH GNAS; GNB1 AND GNG2</scope>
    <scope>ACTIVITY REGULATION</scope>
    <scope>DOMAIN</scope>
    <scope>DISULFIDE BOND</scope>
    <scope>MUTAGENESIS OF HIS-543; LEU-544; THR-545; ASN-546; PHE-547; ILE-549; LEU-550; MET-551; VAL-553; TRP-705; ILE-713; TRP-714; ALA-720; ASN-727; PRO-767; ILE-768; LEU-769; TRP-773; PHE-791; GLN-798; PHE-805 AND HIS-806</scope>
</reference>
<reference evidence="26" key="18">
    <citation type="journal article" date="2022" name="Nature">
        <title>Structural basis of tethered agonism of the adhesion GPCRs ADGRD1 and ADGRF1.</title>
        <authorList>
            <person name="Qu X."/>
            <person name="Qiu N."/>
            <person name="Wang M."/>
            <person name="Zhang B."/>
            <person name="Du J."/>
            <person name="Zhong Z."/>
            <person name="Xu W."/>
            <person name="Chu X."/>
            <person name="Ma L."/>
            <person name="Yi C."/>
            <person name="Han S."/>
            <person name="Shui W."/>
            <person name="Zhao Q."/>
            <person name="Wu B."/>
        </authorList>
    </citation>
    <scope>STRUCTURE BY ELECTRON MICROSCOPY (2.80 ANGSTROMS) OF 545-827 IN COMPLEX WITH GNAS; GNB1 AND GNG2</scope>
    <scope>DISULFIDE BOND</scope>
    <scope>ACTIVITY REGULATION</scope>
    <scope>DOMAIN</scope>
    <scope>MUTAGENESIS OF ASN-546; PHE-547; ILE-549; LEU-550; MET-551; VAL-554; HIS-605; PHE-647; MET-650; GLU-653; HIS-656; LEU-657; TYR-658; ILE-724; ILE-730; VAL-734; LEU-765; PRO-767; ILE-768; LEU-769; GLY-770; TRP-773; GLN-798 AND GLY-799</scope>
</reference>
<reference evidence="27 28 29 30" key="19">
    <citation type="journal article" date="2025" name="Cell">
        <title>Identification, structure, and agonist design of an androgen membrane receptor.</title>
        <authorList>
            <person name="Yang Z."/>
            <person name="Ping Y.Q."/>
            <person name="Wang M.W."/>
            <person name="Zhang C."/>
            <person name="Zhou S.H."/>
            <person name="Xi Y.T."/>
            <person name="Zhu K.K."/>
            <person name="Ding W."/>
            <person name="Zhang Q.Y."/>
            <person name="Song Z.C."/>
            <person name="Zhao R.J."/>
            <person name="He Z.L."/>
            <person name="Wang M.X."/>
            <person name="Qi L."/>
            <person name="Ullmann C."/>
            <person name="Ricken A."/>
            <person name="Schoeneberg T."/>
            <person name="Gan Z.J."/>
            <person name="Yu X."/>
            <person name="Xiao P."/>
            <person name="Yi F."/>
            <person name="Liebscher I."/>
            <person name="Sun J.P."/>
        </authorList>
    </citation>
    <scope>STRUCTURE BY ELECTRON MICROSCOPY (2.80 ANGSTROMS) OF 277-874 IN COMPLEX WITH 5ALPHA-DIHYDROTESTOSTERONE</scope>
    <scope>FUNCTION</scope>
    <scope>ACTIVITY REGULATION</scope>
    <scope>DISULFIDE BOND</scope>
    <scope>MUTAGENESIS OF GLN-563; LEU-619; PHE-623; HIS-640; PHE-643; PHE-716; TRP-773 AND ASN-795</scope>
</reference>
<proteinExistence type="evidence at protein level"/>
<name>AGRD1_HUMAN</name>
<accession>Q6QNK2</accession>
<accession>B2CKK9</accession>
<accession>B7ZLF7</accession>
<accession>Q2M1L3</accession>
<accession>Q6ZMQ1</accession>
<accession>Q7Z7M2</accession>
<accession>Q86SM4</accession>
<evidence type="ECO:0000255" key="1"/>
<evidence type="ECO:0000255" key="2">
    <source>
        <dbReference type="PROSITE-ProRule" id="PRU00098"/>
    </source>
</evidence>
<evidence type="ECO:0000255" key="3">
    <source>
        <dbReference type="PROSITE-ProRule" id="PRU01172"/>
    </source>
</evidence>
<evidence type="ECO:0000256" key="4">
    <source>
        <dbReference type="SAM" id="MobiDB-lite"/>
    </source>
</evidence>
<evidence type="ECO:0000269" key="5">
    <source>
    </source>
</evidence>
<evidence type="ECO:0000269" key="6">
    <source>
    </source>
</evidence>
<evidence type="ECO:0000269" key="7">
    <source>
    </source>
</evidence>
<evidence type="ECO:0000269" key="8">
    <source>
    </source>
</evidence>
<evidence type="ECO:0000269" key="9">
    <source>
    </source>
</evidence>
<evidence type="ECO:0000269" key="10">
    <source>
    </source>
</evidence>
<evidence type="ECO:0000269" key="11">
    <source>
    </source>
</evidence>
<evidence type="ECO:0000269" key="12">
    <source>
    </source>
</evidence>
<evidence type="ECO:0000269" key="13">
    <source>
    </source>
</evidence>
<evidence type="ECO:0000269" key="14">
    <source>
    </source>
</evidence>
<evidence type="ECO:0000269" key="15">
    <source>
    </source>
</evidence>
<evidence type="ECO:0000303" key="16">
    <source>
    </source>
</evidence>
<evidence type="ECO:0000303" key="17">
    <source>
    </source>
</evidence>
<evidence type="ECO:0000303" key="18">
    <source>
    </source>
</evidence>
<evidence type="ECO:0000303" key="19">
    <source>
    </source>
</evidence>
<evidence type="ECO:0000303" key="20">
    <source>
    </source>
</evidence>
<evidence type="ECO:0000305" key="21"/>
<evidence type="ECO:0000305" key="22">
    <source>
    </source>
</evidence>
<evidence type="ECO:0000305" key="23">
    <source>
    </source>
</evidence>
<evidence type="ECO:0000312" key="24">
    <source>
        <dbReference type="HGNC" id="HGNC:19893"/>
    </source>
</evidence>
<evidence type="ECO:0007744" key="25">
    <source>
        <dbReference type="PDB" id="7EPT"/>
    </source>
</evidence>
<evidence type="ECO:0007744" key="26">
    <source>
        <dbReference type="PDB" id="7WU2"/>
    </source>
</evidence>
<evidence type="ECO:0007744" key="27">
    <source>
        <dbReference type="PDB" id="8X9S"/>
    </source>
</evidence>
<evidence type="ECO:0007744" key="28">
    <source>
        <dbReference type="PDB" id="8X9T"/>
    </source>
</evidence>
<evidence type="ECO:0007744" key="29">
    <source>
        <dbReference type="PDB" id="9IV1"/>
    </source>
</evidence>
<evidence type="ECO:0007744" key="30">
    <source>
        <dbReference type="PDB" id="9IV2"/>
    </source>
</evidence>
<evidence type="ECO:0007829" key="31">
    <source>
        <dbReference type="PDB" id="7EPT"/>
    </source>
</evidence>
<evidence type="ECO:0007829" key="32">
    <source>
        <dbReference type="PDB" id="7WU2"/>
    </source>
</evidence>
<dbReference type="EMBL" id="AY532280">
    <property type="protein sequence ID" value="AAS37682.1"/>
    <property type="molecule type" value="mRNA"/>
</dbReference>
<dbReference type="EMBL" id="AY278561">
    <property type="protein sequence ID" value="AAP35063.1"/>
    <property type="molecule type" value="mRNA"/>
</dbReference>
<dbReference type="EMBL" id="EU523118">
    <property type="protein sequence ID" value="ACB20802.1"/>
    <property type="molecule type" value="mRNA"/>
</dbReference>
<dbReference type="EMBL" id="AK131538">
    <property type="protein sequence ID" value="BAD18674.1"/>
    <property type="molecule type" value="mRNA"/>
</dbReference>
<dbReference type="EMBL" id="AC073862">
    <property type="status" value="NOT_ANNOTATED_CDS"/>
    <property type="molecule type" value="Genomic_DNA"/>
</dbReference>
<dbReference type="EMBL" id="AC078925">
    <property type="status" value="NOT_ANNOTATED_CDS"/>
    <property type="molecule type" value="Genomic_DNA"/>
</dbReference>
<dbReference type="EMBL" id="AC126564">
    <property type="status" value="NOT_ANNOTATED_CDS"/>
    <property type="molecule type" value="Genomic_DNA"/>
</dbReference>
<dbReference type="EMBL" id="BC112307">
    <property type="protein sequence ID" value="AAI12308.1"/>
    <property type="molecule type" value="mRNA"/>
</dbReference>
<dbReference type="EMBL" id="BC112309">
    <property type="protein sequence ID" value="AAI12310.1"/>
    <property type="molecule type" value="mRNA"/>
</dbReference>
<dbReference type="EMBL" id="BC143775">
    <property type="protein sequence ID" value="AAI43776.1"/>
    <property type="molecule type" value="mRNA"/>
</dbReference>
<dbReference type="EMBL" id="AY255587">
    <property type="protein sequence ID" value="AAO85099.1"/>
    <property type="molecule type" value="mRNA"/>
</dbReference>
<dbReference type="CCDS" id="CCDS81753.1">
    <molecule id="Q6QNK2-4"/>
</dbReference>
<dbReference type="CCDS" id="CCDS9272.1">
    <molecule id="Q6QNK2-1"/>
</dbReference>
<dbReference type="PIR" id="T47186">
    <property type="entry name" value="T47186"/>
</dbReference>
<dbReference type="RefSeq" id="NP_001317426.1">
    <molecule id="Q6QNK2-4"/>
    <property type="nucleotide sequence ID" value="NM_001330497.2"/>
</dbReference>
<dbReference type="RefSeq" id="NP_942122.2">
    <molecule id="Q6QNK2-1"/>
    <property type="nucleotide sequence ID" value="NM_198827.4"/>
</dbReference>
<dbReference type="PDB" id="7EPT">
    <property type="method" value="EM"/>
    <property type="resolution" value="3.00 A"/>
    <property type="chains" value="R=545-827"/>
</dbReference>
<dbReference type="PDB" id="7WU2">
    <property type="method" value="EM"/>
    <property type="resolution" value="2.80 A"/>
    <property type="chains" value="R=545-827"/>
</dbReference>
<dbReference type="PDB" id="8X9S">
    <property type="method" value="EM"/>
    <property type="resolution" value="3.49 A"/>
    <property type="chains" value="R=277-874"/>
</dbReference>
<dbReference type="PDB" id="8X9T">
    <property type="method" value="EM"/>
    <property type="resolution" value="2.75 A"/>
    <property type="chains" value="R=277-874"/>
</dbReference>
<dbReference type="PDB" id="8X9U">
    <property type="method" value="EM"/>
    <property type="resolution" value="2.88 A"/>
    <property type="chains" value="R=277-874"/>
</dbReference>
<dbReference type="PDB" id="9IV1">
    <property type="method" value="EM"/>
    <property type="resolution" value="2.98 A"/>
    <property type="chains" value="R=562-874"/>
</dbReference>
<dbReference type="PDB" id="9IV2">
    <property type="method" value="EM"/>
    <property type="resolution" value="3.53 A"/>
    <property type="chains" value="R=277-874"/>
</dbReference>
<dbReference type="PDBsum" id="7EPT"/>
<dbReference type="PDBsum" id="7WU2"/>
<dbReference type="PDBsum" id="8X9S"/>
<dbReference type="PDBsum" id="8X9T"/>
<dbReference type="PDBsum" id="8X9U"/>
<dbReference type="PDBsum" id="9IV1"/>
<dbReference type="PDBsum" id="9IV2"/>
<dbReference type="EMDB" id="EMD-31232"/>
<dbReference type="EMDB" id="EMD-32817"/>
<dbReference type="EMDB" id="EMD-38183"/>
<dbReference type="EMDB" id="EMD-38184"/>
<dbReference type="EMDB" id="EMD-38185"/>
<dbReference type="EMDB" id="EMD-60917"/>
<dbReference type="EMDB" id="EMD-60918"/>
<dbReference type="SMR" id="Q6QNK2"/>
<dbReference type="BioGRID" id="129544">
    <property type="interactions" value="7"/>
</dbReference>
<dbReference type="FunCoup" id="Q6QNK2">
    <property type="interactions" value="795"/>
</dbReference>
<dbReference type="IntAct" id="Q6QNK2">
    <property type="interactions" value="1"/>
</dbReference>
<dbReference type="STRING" id="9606.ENSP00000444425"/>
<dbReference type="ChEMBL" id="CHEMBL4523877"/>
<dbReference type="DrugBank" id="DB12637">
    <property type="generic name" value="Onapristone"/>
</dbReference>
<dbReference type="MEROPS" id="P02.021"/>
<dbReference type="GlyConnect" id="1913">
    <property type="glycosylation" value="7 N-Linked glycans (4 sites)"/>
</dbReference>
<dbReference type="GlyCosmos" id="Q6QNK2">
    <property type="glycosylation" value="10 sites, 7 glycans"/>
</dbReference>
<dbReference type="GlyGen" id="Q6QNK2">
    <property type="glycosylation" value="12 sites, 11 N-linked glycans (7 sites), 1 O-linked glycan (1 site)"/>
</dbReference>
<dbReference type="iPTMnet" id="Q6QNK2"/>
<dbReference type="PhosphoSitePlus" id="Q6QNK2"/>
<dbReference type="BioMuta" id="ADGRD1"/>
<dbReference type="DMDM" id="59797935"/>
<dbReference type="MassIVE" id="Q6QNK2"/>
<dbReference type="PaxDb" id="9606-ENSP00000261654"/>
<dbReference type="PeptideAtlas" id="Q6QNK2"/>
<dbReference type="ProteomicsDB" id="67303">
    <molecule id="Q6QNK2-1"/>
</dbReference>
<dbReference type="ProteomicsDB" id="7223"/>
<dbReference type="Antibodypedia" id="19419">
    <property type="antibodies" value="174 antibodies from 28 providers"/>
</dbReference>
<dbReference type="DNASU" id="283383"/>
<dbReference type="Ensembl" id="ENST00000261654.10">
    <molecule id="Q6QNK2-1"/>
    <property type="protein sequence ID" value="ENSP00000261654.5"/>
    <property type="gene ID" value="ENSG00000111452.13"/>
</dbReference>
<dbReference type="Ensembl" id="ENST00000535015.5">
    <molecule id="Q6QNK2-4"/>
    <property type="protein sequence ID" value="ENSP00000444425.1"/>
    <property type="gene ID" value="ENSG00000111452.13"/>
</dbReference>
<dbReference type="Ensembl" id="ENST00000543617.2">
    <molecule id="Q6QNK2-3"/>
    <property type="protein sequence ID" value="ENSP00000438021.1"/>
    <property type="gene ID" value="ENSG00000111452.13"/>
</dbReference>
<dbReference type="GeneID" id="283383"/>
<dbReference type="KEGG" id="hsa:283383"/>
<dbReference type="MANE-Select" id="ENST00000261654.10">
    <property type="protein sequence ID" value="ENSP00000261654.5"/>
    <property type="RefSeq nucleotide sequence ID" value="NM_198827.5"/>
    <property type="RefSeq protein sequence ID" value="NP_942122.2"/>
</dbReference>
<dbReference type="UCSC" id="uc001uit.5">
    <molecule id="Q6QNK2-1"/>
    <property type="organism name" value="human"/>
</dbReference>
<dbReference type="AGR" id="HGNC:19893"/>
<dbReference type="CTD" id="283383"/>
<dbReference type="DisGeNET" id="283383"/>
<dbReference type="GeneCards" id="ADGRD1"/>
<dbReference type="HGNC" id="HGNC:19893">
    <property type="gene designation" value="ADGRD1"/>
</dbReference>
<dbReference type="HPA" id="ENSG00000111452">
    <property type="expression patterns" value="Tissue enhanced (heart)"/>
</dbReference>
<dbReference type="MIM" id="613639">
    <property type="type" value="gene"/>
</dbReference>
<dbReference type="neXtProt" id="NX_Q6QNK2"/>
<dbReference type="OpenTargets" id="ENSG00000111452"/>
<dbReference type="PharmGKB" id="PA134923933"/>
<dbReference type="VEuPathDB" id="HostDB:ENSG00000111452"/>
<dbReference type="eggNOG" id="KOG4193">
    <property type="taxonomic scope" value="Eukaryota"/>
</dbReference>
<dbReference type="GeneTree" id="ENSGT00940000159783"/>
<dbReference type="HOGENOM" id="CLU_008509_0_0_1"/>
<dbReference type="InParanoid" id="Q6QNK2"/>
<dbReference type="OrthoDB" id="347083at2759"/>
<dbReference type="PAN-GO" id="Q6QNK2">
    <property type="GO annotations" value="3 GO annotations based on evolutionary models"/>
</dbReference>
<dbReference type="PhylomeDB" id="Q6QNK2"/>
<dbReference type="TreeFam" id="TF351999"/>
<dbReference type="PathwayCommons" id="Q6QNK2"/>
<dbReference type="SignaLink" id="Q6QNK2"/>
<dbReference type="BioGRID-ORCS" id="283383">
    <property type="hits" value="14 hits in 1155 CRISPR screens"/>
</dbReference>
<dbReference type="ChiTaRS" id="ADGRD1">
    <property type="organism name" value="human"/>
</dbReference>
<dbReference type="GenomeRNAi" id="283383"/>
<dbReference type="Pharos" id="Q6QNK2">
    <property type="development level" value="Tbio"/>
</dbReference>
<dbReference type="PRO" id="PR:Q6QNK2"/>
<dbReference type="Proteomes" id="UP000005640">
    <property type="component" value="Chromosome 12"/>
</dbReference>
<dbReference type="RNAct" id="Q6QNK2">
    <property type="molecule type" value="protein"/>
</dbReference>
<dbReference type="Bgee" id="ENSG00000111452">
    <property type="expression patterns" value="Expressed in cardiac muscle of right atrium and 131 other cell types or tissues"/>
</dbReference>
<dbReference type="ExpressionAtlas" id="Q6QNK2">
    <property type="expression patterns" value="baseline and differential"/>
</dbReference>
<dbReference type="GO" id="GO:0005829">
    <property type="term" value="C:cytosol"/>
    <property type="evidence" value="ECO:0000314"/>
    <property type="project" value="HPA"/>
</dbReference>
<dbReference type="GO" id="GO:0016020">
    <property type="term" value="C:membrane"/>
    <property type="evidence" value="ECO:0000304"/>
    <property type="project" value="GDB"/>
</dbReference>
<dbReference type="GO" id="GO:0016607">
    <property type="term" value="C:nuclear speck"/>
    <property type="evidence" value="ECO:0000314"/>
    <property type="project" value="HPA"/>
</dbReference>
<dbReference type="GO" id="GO:0005654">
    <property type="term" value="C:nucleoplasm"/>
    <property type="evidence" value="ECO:0000314"/>
    <property type="project" value="HPA"/>
</dbReference>
<dbReference type="GO" id="GO:0005886">
    <property type="term" value="C:plasma membrane"/>
    <property type="evidence" value="ECO:0000314"/>
    <property type="project" value="HPA"/>
</dbReference>
<dbReference type="GO" id="GO:0004930">
    <property type="term" value="F:G protein-coupled receptor activity"/>
    <property type="evidence" value="ECO:0000314"/>
    <property type="project" value="UniProtKB"/>
</dbReference>
<dbReference type="GO" id="GO:0007189">
    <property type="term" value="P:adenylate cyclase-activating G protein-coupled receptor signaling pathway"/>
    <property type="evidence" value="ECO:0000314"/>
    <property type="project" value="UniProtKB"/>
</dbReference>
<dbReference type="GO" id="GO:0007166">
    <property type="term" value="P:cell surface receptor signaling pathway"/>
    <property type="evidence" value="ECO:0007669"/>
    <property type="project" value="InterPro"/>
</dbReference>
<dbReference type="GO" id="GO:0007186">
    <property type="term" value="P:G protein-coupled receptor signaling pathway"/>
    <property type="evidence" value="ECO:0000314"/>
    <property type="project" value="UniProtKB"/>
</dbReference>
<dbReference type="GO" id="GO:0014819">
    <property type="term" value="P:regulation of skeletal muscle contraction"/>
    <property type="evidence" value="ECO:0000314"/>
    <property type="project" value="UniProtKB"/>
</dbReference>
<dbReference type="CDD" id="cd15256">
    <property type="entry name" value="7tmB2_GPR133"/>
    <property type="match status" value="1"/>
</dbReference>
<dbReference type="FunFam" id="1.20.1070.10:FF:000073">
    <property type="entry name" value="Adhesion G-protein coupled receptor D1"/>
    <property type="match status" value="1"/>
</dbReference>
<dbReference type="FunFam" id="2.60.220.50:FF:000008">
    <property type="entry name" value="Adhesion G-protein coupled receptor D1"/>
    <property type="match status" value="1"/>
</dbReference>
<dbReference type="FunFam" id="2.60.120.200:FF:000104">
    <property type="entry name" value="adhesion G-protein coupled receptor D1"/>
    <property type="match status" value="1"/>
</dbReference>
<dbReference type="Gene3D" id="2.60.120.200">
    <property type="match status" value="1"/>
</dbReference>
<dbReference type="Gene3D" id="2.60.220.50">
    <property type="match status" value="1"/>
</dbReference>
<dbReference type="Gene3D" id="1.20.1070.10">
    <property type="entry name" value="Rhodopsin 7-helix transmembrane proteins"/>
    <property type="match status" value="1"/>
</dbReference>
<dbReference type="InterPro" id="IPR013320">
    <property type="entry name" value="ConA-like_dom_sf"/>
</dbReference>
<dbReference type="InterPro" id="IPR057244">
    <property type="entry name" value="GAIN_B"/>
</dbReference>
<dbReference type="InterPro" id="IPR046338">
    <property type="entry name" value="GAIN_dom_sf"/>
</dbReference>
<dbReference type="InterPro" id="IPR017981">
    <property type="entry name" value="GPCR_2-like_7TM"/>
</dbReference>
<dbReference type="InterPro" id="IPR000832">
    <property type="entry name" value="GPCR_2_secretin-like"/>
</dbReference>
<dbReference type="InterPro" id="IPR017983">
    <property type="entry name" value="GPCR_2_secretin-like_CS"/>
</dbReference>
<dbReference type="InterPro" id="IPR000203">
    <property type="entry name" value="GPS"/>
</dbReference>
<dbReference type="InterPro" id="IPR001759">
    <property type="entry name" value="Pentraxin-related"/>
</dbReference>
<dbReference type="PANTHER" id="PTHR12011">
    <property type="entry name" value="ADHESION G-PROTEIN COUPLED RECEPTOR"/>
    <property type="match status" value="1"/>
</dbReference>
<dbReference type="PANTHER" id="PTHR12011:SF216">
    <property type="entry name" value="ADHESION G-PROTEIN COUPLED RECEPTOR D1"/>
    <property type="match status" value="1"/>
</dbReference>
<dbReference type="Pfam" id="PF00002">
    <property type="entry name" value="7tm_2"/>
    <property type="match status" value="1"/>
</dbReference>
<dbReference type="Pfam" id="PF01825">
    <property type="entry name" value="GPS"/>
    <property type="match status" value="1"/>
</dbReference>
<dbReference type="Pfam" id="PF13385">
    <property type="entry name" value="Laminin_G_3"/>
    <property type="match status" value="1"/>
</dbReference>
<dbReference type="PRINTS" id="PR00249">
    <property type="entry name" value="GPCRSECRETIN"/>
</dbReference>
<dbReference type="SMART" id="SM00303">
    <property type="entry name" value="GPS"/>
    <property type="match status" value="1"/>
</dbReference>
<dbReference type="SUPFAM" id="SSF49899">
    <property type="entry name" value="Concanavalin A-like lectins/glucanases"/>
    <property type="match status" value="1"/>
</dbReference>
<dbReference type="SUPFAM" id="SSF81321">
    <property type="entry name" value="Family A G protein-coupled receptor-like"/>
    <property type="match status" value="1"/>
</dbReference>
<dbReference type="PROSITE" id="PS00650">
    <property type="entry name" value="G_PROTEIN_RECEP_F2_2"/>
    <property type="match status" value="1"/>
</dbReference>
<dbReference type="PROSITE" id="PS50261">
    <property type="entry name" value="G_PROTEIN_RECEP_F2_4"/>
    <property type="match status" value="1"/>
</dbReference>
<dbReference type="PROSITE" id="PS50221">
    <property type="entry name" value="GAIN_B"/>
    <property type="match status" value="1"/>
</dbReference>
<dbReference type="PROSITE" id="PS51828">
    <property type="entry name" value="PTX_2"/>
    <property type="match status" value="1"/>
</dbReference>
<protein>
    <recommendedName>
        <fullName evidence="20">Adhesion G-protein coupled receptor D1</fullName>
    </recommendedName>
    <alternativeName>
        <fullName evidence="19">G-protein coupled receptor 133</fullName>
    </alternativeName>
    <alternativeName>
        <fullName>G-protein coupled receptor PGR25</fullName>
    </alternativeName>
    <component>
        <recommendedName>
            <fullName evidence="21">Adhesion G-protein coupled receptor D1, N-terminal fragment</fullName>
            <shortName evidence="21">ADGRD1 N-terminal fragment</shortName>
        </recommendedName>
    </component>
    <component>
        <recommendedName>
            <fullName evidence="21">Adhesion G-protein coupled receptor D1, C-terminal fragment</fullName>
            <shortName evidence="21">ADGRD1 C-terminal fragment</shortName>
        </recommendedName>
    </component>
</protein>